<dbReference type="EMBL" id="AY675081">
    <property type="protein sequence ID" value="AAT84374.1"/>
    <property type="molecule type" value="mRNA"/>
</dbReference>
<dbReference type="RefSeq" id="NP_001003900.1">
    <property type="nucleotide sequence ID" value="NM_001003900.1"/>
</dbReference>
<dbReference type="PDB" id="1SA0">
    <property type="method" value="X-ray"/>
    <property type="resolution" value="3.58 A"/>
    <property type="chains" value="B/D=1-439"/>
</dbReference>
<dbReference type="PDB" id="1SA1">
    <property type="method" value="X-ray"/>
    <property type="resolution" value="4.20 A"/>
    <property type="chains" value="B/D=1-439"/>
</dbReference>
<dbReference type="PDB" id="1TVK">
    <property type="method" value="X-ray"/>
    <property type="resolution" value="2.89 A"/>
    <property type="chains" value="B=1-427"/>
</dbReference>
<dbReference type="PDB" id="1Z2B">
    <property type="method" value="X-ray"/>
    <property type="resolution" value="4.10 A"/>
    <property type="chains" value="B/D=1-445"/>
</dbReference>
<dbReference type="PDB" id="2P4N">
    <property type="method" value="EM"/>
    <property type="resolution" value="9.00 A"/>
    <property type="chains" value="B=1-445"/>
</dbReference>
<dbReference type="PDB" id="2WBE">
    <property type="method" value="EM"/>
    <property type="resolution" value="9.40 A"/>
    <property type="chains" value="B=1-445"/>
</dbReference>
<dbReference type="PDB" id="2XRP">
    <property type="method" value="EM"/>
    <property type="resolution" value="8.20 A"/>
    <property type="chains" value="A/C/E/G=1-445"/>
</dbReference>
<dbReference type="PDB" id="3DCO">
    <property type="method" value="EM"/>
    <property type="resolution" value="1.90 A"/>
    <property type="chains" value="B=1-445"/>
</dbReference>
<dbReference type="PDB" id="3DU7">
    <property type="method" value="X-ray"/>
    <property type="resolution" value="4.10 A"/>
    <property type="chains" value="B/D=1-445"/>
</dbReference>
<dbReference type="PDB" id="3E22">
    <property type="method" value="X-ray"/>
    <property type="resolution" value="3.80 A"/>
    <property type="chains" value="B/D=1-445"/>
</dbReference>
<dbReference type="PDB" id="3IZ0">
    <property type="method" value="EM"/>
    <property type="resolution" value="8.60 A"/>
    <property type="chains" value="B=1-445"/>
</dbReference>
<dbReference type="PDB" id="3J1T">
    <property type="method" value="EM"/>
    <property type="resolution" value="9.70 A"/>
    <property type="chains" value="C=1-427"/>
</dbReference>
<dbReference type="PDB" id="3J1U">
    <property type="method" value="EM"/>
    <property type="resolution" value="9.70 A"/>
    <property type="chains" value="C=1-427"/>
</dbReference>
<dbReference type="PDB" id="3J2U">
    <property type="method" value="EM"/>
    <property type="resolution" value="10.80 A"/>
    <property type="chains" value="B/D=1-445"/>
</dbReference>
<dbReference type="PDB" id="4AQV">
    <property type="method" value="EM"/>
    <property type="resolution" value="9.70 A"/>
    <property type="chains" value="B=1-445"/>
</dbReference>
<dbReference type="PDB" id="4AQW">
    <property type="method" value="EM"/>
    <property type="resolution" value="9.50 A"/>
    <property type="chains" value="B=1-445"/>
</dbReference>
<dbReference type="PDB" id="4ATU">
    <property type="method" value="EM"/>
    <property type="resolution" value="8.30 A"/>
    <property type="chains" value="A/C/E/G=1-445"/>
</dbReference>
<dbReference type="PDB" id="4ATX">
    <property type="method" value="EM"/>
    <property type="resolution" value="8.20 A"/>
    <property type="chains" value="A=1-445"/>
</dbReference>
<dbReference type="PDB" id="4CK5">
    <property type="method" value="EM"/>
    <property type="resolution" value="10.00 A"/>
    <property type="chains" value="B=1-445"/>
</dbReference>
<dbReference type="PDB" id="4CK6">
    <property type="method" value="EM"/>
    <property type="resolution" value="9.20 A"/>
    <property type="chains" value="B=1-445"/>
</dbReference>
<dbReference type="PDB" id="4CK7">
    <property type="method" value="EM"/>
    <property type="resolution" value="9.20 A"/>
    <property type="chains" value="B=1-445"/>
</dbReference>
<dbReference type="PDB" id="4I4T">
    <property type="method" value="X-ray"/>
    <property type="resolution" value="1.80 A"/>
    <property type="chains" value="B/D=1-445"/>
</dbReference>
<dbReference type="PDB" id="4I50">
    <property type="method" value="X-ray"/>
    <property type="resolution" value="2.30 A"/>
    <property type="chains" value="B/D=1-445"/>
</dbReference>
<dbReference type="PDB" id="4I55">
    <property type="method" value="X-ray"/>
    <property type="resolution" value="2.20 A"/>
    <property type="chains" value="B/D=1-445"/>
</dbReference>
<dbReference type="PDB" id="4IHJ">
    <property type="method" value="X-ray"/>
    <property type="resolution" value="2.00 A"/>
    <property type="chains" value="B/D=1-445"/>
</dbReference>
<dbReference type="PDB" id="4IIJ">
    <property type="method" value="X-ray"/>
    <property type="resolution" value="2.60 A"/>
    <property type="chains" value="B/D=1-445"/>
</dbReference>
<dbReference type="PDB" id="4O2A">
    <property type="method" value="X-ray"/>
    <property type="resolution" value="2.50 A"/>
    <property type="chains" value="B/D=1-445"/>
</dbReference>
<dbReference type="PDB" id="4O2B">
    <property type="method" value="X-ray"/>
    <property type="resolution" value="2.30 A"/>
    <property type="chains" value="B/D=1-445"/>
</dbReference>
<dbReference type="PDB" id="4O4H">
    <property type="method" value="X-ray"/>
    <property type="resolution" value="2.10 A"/>
    <property type="chains" value="B/D=1-445"/>
</dbReference>
<dbReference type="PDB" id="4O4I">
    <property type="method" value="X-ray"/>
    <property type="resolution" value="2.40 A"/>
    <property type="chains" value="B/D=1-445"/>
</dbReference>
<dbReference type="PDB" id="4O4J">
    <property type="method" value="X-ray"/>
    <property type="resolution" value="2.20 A"/>
    <property type="chains" value="B/D=1-445"/>
</dbReference>
<dbReference type="PDB" id="4O4L">
    <property type="method" value="X-ray"/>
    <property type="resolution" value="2.20 A"/>
    <property type="chains" value="B/D=1-445"/>
</dbReference>
<dbReference type="PDB" id="4TUY">
    <property type="method" value="X-ray"/>
    <property type="resolution" value="2.10 A"/>
    <property type="chains" value="B/D=1-445"/>
</dbReference>
<dbReference type="PDB" id="4TV8">
    <property type="method" value="X-ray"/>
    <property type="resolution" value="2.10 A"/>
    <property type="chains" value="B/D=1-445"/>
</dbReference>
<dbReference type="PDB" id="4TV9">
    <property type="method" value="X-ray"/>
    <property type="resolution" value="2.00 A"/>
    <property type="chains" value="B/D=1-445"/>
</dbReference>
<dbReference type="PDB" id="4UXO">
    <property type="method" value="EM"/>
    <property type="resolution" value="6.30 A"/>
    <property type="chains" value="B=1-445"/>
</dbReference>
<dbReference type="PDB" id="4UXP">
    <property type="method" value="EM"/>
    <property type="resolution" value="6.30 A"/>
    <property type="chains" value="B=1-445"/>
</dbReference>
<dbReference type="PDB" id="4UXR">
    <property type="method" value="EM"/>
    <property type="resolution" value="7.00 A"/>
    <property type="chains" value="B=1-445"/>
</dbReference>
<dbReference type="PDB" id="4UXS">
    <property type="method" value="EM"/>
    <property type="resolution" value="7.00 A"/>
    <property type="chains" value="B=1-445"/>
</dbReference>
<dbReference type="PDB" id="4UXT">
    <property type="method" value="EM"/>
    <property type="resolution" value="7.40 A"/>
    <property type="chains" value="B=1-445"/>
</dbReference>
<dbReference type="PDB" id="4UXY">
    <property type="method" value="EM"/>
    <property type="resolution" value="6.50 A"/>
    <property type="chains" value="B=1-445"/>
</dbReference>
<dbReference type="PDB" id="4UY0">
    <property type="method" value="EM"/>
    <property type="resolution" value="7.70 A"/>
    <property type="chains" value="B=2-427"/>
</dbReference>
<dbReference type="PDB" id="4YJ2">
    <property type="method" value="X-ray"/>
    <property type="resolution" value="2.60 A"/>
    <property type="chains" value="B/D=1-445"/>
</dbReference>
<dbReference type="PDB" id="4YJ3">
    <property type="method" value="X-ray"/>
    <property type="resolution" value="3.75 A"/>
    <property type="chains" value="B/D=1-445"/>
</dbReference>
<dbReference type="PDB" id="5EIB">
    <property type="method" value="X-ray"/>
    <property type="resolution" value="2.10 A"/>
    <property type="chains" value="D=1-445"/>
</dbReference>
<dbReference type="PDB" id="5EZY">
    <property type="method" value="X-ray"/>
    <property type="resolution" value="2.05 A"/>
    <property type="chains" value="B/D=1-445"/>
</dbReference>
<dbReference type="PDB" id="5GON">
    <property type="method" value="X-ray"/>
    <property type="resolution" value="2.48 A"/>
    <property type="chains" value="B/D=1-431"/>
</dbReference>
<dbReference type="PDB" id="5H74">
    <property type="method" value="X-ray"/>
    <property type="resolution" value="2.60 A"/>
    <property type="chains" value="B/D=1-445"/>
</dbReference>
<dbReference type="PDB" id="5H7O">
    <property type="method" value="X-ray"/>
    <property type="resolution" value="2.80 A"/>
    <property type="chains" value="B/D=1-445"/>
</dbReference>
<dbReference type="PDB" id="5ITZ">
    <property type="method" value="X-ray"/>
    <property type="resolution" value="2.20 A"/>
    <property type="chains" value="B=1-445"/>
</dbReference>
<dbReference type="PDB" id="5IYZ">
    <property type="method" value="X-ray"/>
    <property type="resolution" value="1.80 A"/>
    <property type="chains" value="B/D=1-445"/>
</dbReference>
<dbReference type="PDB" id="5J2T">
    <property type="method" value="X-ray"/>
    <property type="resolution" value="2.20 A"/>
    <property type="chains" value="B/D=1-445"/>
</dbReference>
<dbReference type="PDB" id="5J2U">
    <property type="method" value="X-ray"/>
    <property type="resolution" value="2.50 A"/>
    <property type="chains" value="B/D=1-445"/>
</dbReference>
<dbReference type="PDB" id="5JH7">
    <property type="method" value="X-ray"/>
    <property type="resolution" value="2.25 A"/>
    <property type="chains" value="B/D=1-445"/>
</dbReference>
<dbReference type="PDB" id="5JVD">
    <property type="method" value="X-ray"/>
    <property type="resolution" value="2.39 A"/>
    <property type="chains" value="B/D=1-445"/>
</dbReference>
<dbReference type="PDB" id="5LA6">
    <property type="method" value="X-ray"/>
    <property type="resolution" value="2.10 A"/>
    <property type="chains" value="B/D=1-445"/>
</dbReference>
<dbReference type="PDB" id="5LOV">
    <property type="method" value="X-ray"/>
    <property type="resolution" value="2.40 A"/>
    <property type="chains" value="B/D=1-445"/>
</dbReference>
<dbReference type="PDB" id="5LP6">
    <property type="method" value="X-ray"/>
    <property type="resolution" value="2.90 A"/>
    <property type="chains" value="B/D=1-445"/>
</dbReference>
<dbReference type="PDB" id="5LXS">
    <property type="method" value="X-ray"/>
    <property type="resolution" value="2.20 A"/>
    <property type="chains" value="B/D=1-445"/>
</dbReference>
<dbReference type="PDB" id="5LXT">
    <property type="method" value="X-ray"/>
    <property type="resolution" value="1.90 A"/>
    <property type="chains" value="B/D=1-445"/>
</dbReference>
<dbReference type="PDB" id="5LYJ">
    <property type="method" value="X-ray"/>
    <property type="resolution" value="2.40 A"/>
    <property type="chains" value="B/D=1-445"/>
</dbReference>
<dbReference type="PDB" id="5M50">
    <property type="method" value="EM"/>
    <property type="resolution" value="5.30 A"/>
    <property type="chains" value="B/E=1-427"/>
</dbReference>
<dbReference type="PDB" id="5M54">
    <property type="method" value="EM"/>
    <property type="resolution" value="8.00 A"/>
    <property type="chains" value="B/E=2-427"/>
</dbReference>
<dbReference type="PDB" id="5M5C">
    <property type="method" value="EM"/>
    <property type="resolution" value="4.80 A"/>
    <property type="chains" value="B/E=2-427"/>
</dbReference>
<dbReference type="PDB" id="5M5I">
    <property type="method" value="EM"/>
    <property type="resolution" value="9.30 A"/>
    <property type="chains" value="B=1-445"/>
</dbReference>
<dbReference type="PDB" id="5M5L">
    <property type="method" value="EM"/>
    <property type="resolution" value="9.30 A"/>
    <property type="chains" value="B=1-445"/>
</dbReference>
<dbReference type="PDB" id="5M5M">
    <property type="method" value="EM"/>
    <property type="resolution" value="9.30 A"/>
    <property type="chains" value="B=1-445"/>
</dbReference>
<dbReference type="PDB" id="5M5N">
    <property type="method" value="EM"/>
    <property type="resolution" value="9.30 A"/>
    <property type="chains" value="B=1-445"/>
</dbReference>
<dbReference type="PDB" id="5M5O">
    <property type="method" value="EM"/>
    <property type="resolution" value="9.30 A"/>
    <property type="chains" value="B=1-445"/>
</dbReference>
<dbReference type="PDB" id="5M7E">
    <property type="method" value="X-ray"/>
    <property type="resolution" value="2.05 A"/>
    <property type="chains" value="B/D=1-445"/>
</dbReference>
<dbReference type="PDB" id="5M7G">
    <property type="method" value="X-ray"/>
    <property type="resolution" value="2.25 A"/>
    <property type="chains" value="B/D=1-445"/>
</dbReference>
<dbReference type="PDB" id="5M8D">
    <property type="method" value="X-ray"/>
    <property type="resolution" value="2.25 A"/>
    <property type="chains" value="B/D=1-445"/>
</dbReference>
<dbReference type="PDB" id="5M8G">
    <property type="method" value="X-ray"/>
    <property type="resolution" value="2.15 A"/>
    <property type="chains" value="B/D=1-445"/>
</dbReference>
<dbReference type="PDB" id="5MF4">
    <property type="method" value="X-ray"/>
    <property type="resolution" value="2.30 A"/>
    <property type="chains" value="B/D=1-445"/>
</dbReference>
<dbReference type="PDB" id="5ND2">
    <property type="method" value="EM"/>
    <property type="resolution" value="5.80 A"/>
    <property type="chains" value="B=1-445"/>
</dbReference>
<dbReference type="PDB" id="5ND3">
    <property type="method" value="EM"/>
    <property type="resolution" value="6.10 A"/>
    <property type="chains" value="B=1-445"/>
</dbReference>
<dbReference type="PDB" id="5ND4">
    <property type="method" value="EM"/>
    <property type="resolution" value="4.40 A"/>
    <property type="chains" value="B=2-427"/>
</dbReference>
<dbReference type="PDB" id="5ND7">
    <property type="method" value="EM"/>
    <property type="resolution" value="7.90 A"/>
    <property type="chains" value="B=1-445"/>
</dbReference>
<dbReference type="PDB" id="5NFZ">
    <property type="method" value="X-ray"/>
    <property type="resolution" value="2.10 A"/>
    <property type="chains" value="B/D=1-445"/>
</dbReference>
<dbReference type="PDB" id="5NG1">
    <property type="method" value="X-ray"/>
    <property type="resolution" value="2.20 A"/>
    <property type="chains" value="B/D=1-445"/>
</dbReference>
<dbReference type="PDB" id="5NJH">
    <property type="method" value="X-ray"/>
    <property type="resolution" value="2.39 A"/>
    <property type="chains" value="B/D=1-445"/>
</dbReference>
<dbReference type="PDB" id="5NM5">
    <property type="method" value="X-ray"/>
    <property type="resolution" value="2.05 A"/>
    <property type="chains" value="B=1-445"/>
</dbReference>
<dbReference type="PDB" id="5NQT">
    <property type="method" value="X-ray"/>
    <property type="resolution" value="2.15 A"/>
    <property type="chains" value="B=1-445"/>
</dbReference>
<dbReference type="PDB" id="5NQU">
    <property type="method" value="X-ray"/>
    <property type="resolution" value="1.80 A"/>
    <property type="chains" value="B=1-445"/>
</dbReference>
<dbReference type="PDB" id="5O7A">
    <property type="method" value="X-ray"/>
    <property type="resolution" value="2.50 A"/>
    <property type="chains" value="B/D=1-445"/>
</dbReference>
<dbReference type="PDB" id="5OSK">
    <property type="method" value="X-ray"/>
    <property type="resolution" value="2.11 A"/>
    <property type="chains" value="B/D=1-445"/>
</dbReference>
<dbReference type="PDB" id="5OV7">
    <property type="method" value="X-ray"/>
    <property type="resolution" value="2.40 A"/>
    <property type="chains" value="B/D=1-445"/>
</dbReference>
<dbReference type="PDB" id="5S4L">
    <property type="method" value="X-ray"/>
    <property type="resolution" value="2.30 A"/>
    <property type="chains" value="B/D=1-445"/>
</dbReference>
<dbReference type="PDB" id="5S4M">
    <property type="method" value="X-ray"/>
    <property type="resolution" value="2.15 A"/>
    <property type="chains" value="B/D=1-445"/>
</dbReference>
<dbReference type="PDB" id="5S4N">
    <property type="method" value="X-ray"/>
    <property type="resolution" value="2.53 A"/>
    <property type="chains" value="B/D=1-445"/>
</dbReference>
<dbReference type="PDB" id="5S4O">
    <property type="method" value="X-ray"/>
    <property type="resolution" value="2.30 A"/>
    <property type="chains" value="B/D=1-445"/>
</dbReference>
<dbReference type="PDB" id="5S4P">
    <property type="method" value="X-ray"/>
    <property type="resolution" value="2.29 A"/>
    <property type="chains" value="B/D=1-445"/>
</dbReference>
<dbReference type="PDB" id="5S4Q">
    <property type="method" value="X-ray"/>
    <property type="resolution" value="2.59 A"/>
    <property type="chains" value="B/D=1-445"/>
</dbReference>
<dbReference type="PDB" id="5S4R">
    <property type="method" value="X-ray"/>
    <property type="resolution" value="2.35 A"/>
    <property type="chains" value="B/D=1-445"/>
</dbReference>
<dbReference type="PDB" id="5S4S">
    <property type="method" value="X-ray"/>
    <property type="resolution" value="2.35 A"/>
    <property type="chains" value="B/D=1-445"/>
</dbReference>
<dbReference type="PDB" id="5S4T">
    <property type="method" value="X-ray"/>
    <property type="resolution" value="2.27 A"/>
    <property type="chains" value="B/D=1-445"/>
</dbReference>
<dbReference type="PDB" id="5S4U">
    <property type="method" value="X-ray"/>
    <property type="resolution" value="2.39 A"/>
    <property type="chains" value="B/D=1-445"/>
</dbReference>
<dbReference type="PDB" id="5S4V">
    <property type="method" value="X-ray"/>
    <property type="resolution" value="2.30 A"/>
    <property type="chains" value="B/D=1-445"/>
</dbReference>
<dbReference type="PDB" id="5S4W">
    <property type="method" value="X-ray"/>
    <property type="resolution" value="2.80 A"/>
    <property type="chains" value="B/D=1-445"/>
</dbReference>
<dbReference type="PDB" id="5S4X">
    <property type="method" value="X-ray"/>
    <property type="resolution" value="2.53 A"/>
    <property type="chains" value="B/D=1-445"/>
</dbReference>
<dbReference type="PDB" id="5S4Y">
    <property type="method" value="X-ray"/>
    <property type="resolution" value="2.30 A"/>
    <property type="chains" value="B/D=1-445"/>
</dbReference>
<dbReference type="PDB" id="5S4Z">
    <property type="method" value="X-ray"/>
    <property type="resolution" value="2.10 A"/>
    <property type="chains" value="B/D=1-445"/>
</dbReference>
<dbReference type="PDB" id="5S50">
    <property type="method" value="X-ray"/>
    <property type="resolution" value="3.10 A"/>
    <property type="chains" value="B/D=1-445"/>
</dbReference>
<dbReference type="PDB" id="5S51">
    <property type="method" value="X-ray"/>
    <property type="resolution" value="2.40 A"/>
    <property type="chains" value="B/D=1-445"/>
</dbReference>
<dbReference type="PDB" id="5S52">
    <property type="method" value="X-ray"/>
    <property type="resolution" value="2.83 A"/>
    <property type="chains" value="B/D=1-445"/>
</dbReference>
<dbReference type="PDB" id="5S53">
    <property type="method" value="X-ray"/>
    <property type="resolution" value="2.75 A"/>
    <property type="chains" value="B/D=1-445"/>
</dbReference>
<dbReference type="PDB" id="5S54">
    <property type="method" value="X-ray"/>
    <property type="resolution" value="2.40 A"/>
    <property type="chains" value="B/D=1-445"/>
</dbReference>
<dbReference type="PDB" id="5S55">
    <property type="method" value="X-ray"/>
    <property type="resolution" value="2.30 A"/>
    <property type="chains" value="B/D=1-445"/>
</dbReference>
<dbReference type="PDB" id="5S56">
    <property type="method" value="X-ray"/>
    <property type="resolution" value="2.25 A"/>
    <property type="chains" value="B/D=1-445"/>
</dbReference>
<dbReference type="PDB" id="5S57">
    <property type="method" value="X-ray"/>
    <property type="resolution" value="2.45 A"/>
    <property type="chains" value="B/D=1-445"/>
</dbReference>
<dbReference type="PDB" id="5S58">
    <property type="method" value="X-ray"/>
    <property type="resolution" value="2.30 A"/>
    <property type="chains" value="B/D=1-445"/>
</dbReference>
<dbReference type="PDB" id="5S59">
    <property type="method" value="X-ray"/>
    <property type="resolution" value="2.60 A"/>
    <property type="chains" value="B/D=1-445"/>
</dbReference>
<dbReference type="PDB" id="5S5A">
    <property type="method" value="X-ray"/>
    <property type="resolution" value="2.35 A"/>
    <property type="chains" value="B/D=1-445"/>
</dbReference>
<dbReference type="PDB" id="5S5B">
    <property type="method" value="X-ray"/>
    <property type="resolution" value="2.30 A"/>
    <property type="chains" value="B/D=1-445"/>
</dbReference>
<dbReference type="PDB" id="5S5C">
    <property type="method" value="X-ray"/>
    <property type="resolution" value="2.40 A"/>
    <property type="chains" value="B/D=1-445"/>
</dbReference>
<dbReference type="PDB" id="5S5D">
    <property type="method" value="X-ray"/>
    <property type="resolution" value="1.90 A"/>
    <property type="chains" value="B/D=1-445"/>
</dbReference>
<dbReference type="PDB" id="5S5E">
    <property type="method" value="X-ray"/>
    <property type="resolution" value="2.67 A"/>
    <property type="chains" value="B/D=1-445"/>
</dbReference>
<dbReference type="PDB" id="5S5F">
    <property type="method" value="X-ray"/>
    <property type="resolution" value="2.24 A"/>
    <property type="chains" value="B/D=1-445"/>
</dbReference>
<dbReference type="PDB" id="5S5G">
    <property type="method" value="X-ray"/>
    <property type="resolution" value="2.69 A"/>
    <property type="chains" value="B/D=1-445"/>
</dbReference>
<dbReference type="PDB" id="5S5H">
    <property type="method" value="X-ray"/>
    <property type="resolution" value="2.50 A"/>
    <property type="chains" value="B/D=1-445"/>
</dbReference>
<dbReference type="PDB" id="5S5I">
    <property type="method" value="X-ray"/>
    <property type="resolution" value="2.49 A"/>
    <property type="chains" value="B/D=1-445"/>
</dbReference>
<dbReference type="PDB" id="5S5J">
    <property type="method" value="X-ray"/>
    <property type="resolution" value="2.25 A"/>
    <property type="chains" value="B/D=1-445"/>
</dbReference>
<dbReference type="PDB" id="5S5K">
    <property type="method" value="X-ray"/>
    <property type="resolution" value="2.41 A"/>
    <property type="chains" value="B/D=1-445"/>
</dbReference>
<dbReference type="PDB" id="5S5L">
    <property type="method" value="X-ray"/>
    <property type="resolution" value="2.25 A"/>
    <property type="chains" value="B/D=1-445"/>
</dbReference>
<dbReference type="PDB" id="5S5M">
    <property type="method" value="X-ray"/>
    <property type="resolution" value="2.70 A"/>
    <property type="chains" value="B/D=1-445"/>
</dbReference>
<dbReference type="PDB" id="5S5N">
    <property type="method" value="X-ray"/>
    <property type="resolution" value="2.90 A"/>
    <property type="chains" value="B/D=1-445"/>
</dbReference>
<dbReference type="PDB" id="5S5O">
    <property type="method" value="X-ray"/>
    <property type="resolution" value="2.30 A"/>
    <property type="chains" value="B/D=1-445"/>
</dbReference>
<dbReference type="PDB" id="5S5P">
    <property type="method" value="X-ray"/>
    <property type="resolution" value="2.79 A"/>
    <property type="chains" value="B/D=1-445"/>
</dbReference>
<dbReference type="PDB" id="5S5Q">
    <property type="method" value="X-ray"/>
    <property type="resolution" value="2.05 A"/>
    <property type="chains" value="B/D=1-445"/>
</dbReference>
<dbReference type="PDB" id="5S5R">
    <property type="method" value="X-ray"/>
    <property type="resolution" value="2.30 A"/>
    <property type="chains" value="B/D=1-445"/>
</dbReference>
<dbReference type="PDB" id="5S5S">
    <property type="method" value="X-ray"/>
    <property type="resolution" value="2.36 A"/>
    <property type="chains" value="B/D=1-445"/>
</dbReference>
<dbReference type="PDB" id="5S5T">
    <property type="method" value="X-ray"/>
    <property type="resolution" value="2.53 A"/>
    <property type="chains" value="B/D=1-445"/>
</dbReference>
<dbReference type="PDB" id="5S5U">
    <property type="method" value="X-ray"/>
    <property type="resolution" value="2.50 A"/>
    <property type="chains" value="B/D=1-445"/>
</dbReference>
<dbReference type="PDB" id="5S5V">
    <property type="method" value="X-ray"/>
    <property type="resolution" value="2.70 A"/>
    <property type="chains" value="B/D=1-445"/>
</dbReference>
<dbReference type="PDB" id="5S5W">
    <property type="method" value="X-ray"/>
    <property type="resolution" value="2.35 A"/>
    <property type="chains" value="B/D=1-445"/>
</dbReference>
<dbReference type="PDB" id="5S5X">
    <property type="method" value="X-ray"/>
    <property type="resolution" value="2.32 A"/>
    <property type="chains" value="B/D=1-445"/>
</dbReference>
<dbReference type="PDB" id="5S5Y">
    <property type="method" value="X-ray"/>
    <property type="resolution" value="2.26 A"/>
    <property type="chains" value="B/D=1-445"/>
</dbReference>
<dbReference type="PDB" id="5S5Z">
    <property type="method" value="X-ray"/>
    <property type="resolution" value="2.55 A"/>
    <property type="chains" value="B/D=1-445"/>
</dbReference>
<dbReference type="PDB" id="5S60">
    <property type="method" value="X-ray"/>
    <property type="resolution" value="2.30 A"/>
    <property type="chains" value="B/D=1-445"/>
</dbReference>
<dbReference type="PDB" id="5S61">
    <property type="method" value="X-ray"/>
    <property type="resolution" value="1.95 A"/>
    <property type="chains" value="B/D=1-445"/>
</dbReference>
<dbReference type="PDB" id="5S62">
    <property type="method" value="X-ray"/>
    <property type="resolution" value="2.75 A"/>
    <property type="chains" value="B/D=1-445"/>
</dbReference>
<dbReference type="PDB" id="5S63">
    <property type="method" value="X-ray"/>
    <property type="resolution" value="2.60 A"/>
    <property type="chains" value="B/D=1-445"/>
</dbReference>
<dbReference type="PDB" id="5S64">
    <property type="method" value="X-ray"/>
    <property type="resolution" value="2.75 A"/>
    <property type="chains" value="B/D=1-445"/>
</dbReference>
<dbReference type="PDB" id="5S65">
    <property type="method" value="X-ray"/>
    <property type="resolution" value="2.25 A"/>
    <property type="chains" value="B/D=1-445"/>
</dbReference>
<dbReference type="PDB" id="5S66">
    <property type="method" value="X-ray"/>
    <property type="resolution" value="2.10 A"/>
    <property type="chains" value="B/D=1-445"/>
</dbReference>
<dbReference type="PDB" id="5S67">
    <property type="method" value="X-ray"/>
    <property type="resolution" value="2.10 A"/>
    <property type="chains" value="B/D=1-445"/>
</dbReference>
<dbReference type="PDB" id="5SB3">
    <property type="method" value="X-ray"/>
    <property type="resolution" value="2.20 A"/>
    <property type="chains" value="B/D=1-445"/>
</dbReference>
<dbReference type="PDB" id="5SB4">
    <property type="method" value="X-ray"/>
    <property type="resolution" value="2.50 A"/>
    <property type="chains" value="B/D=1-445"/>
</dbReference>
<dbReference type="PDB" id="5SB5">
    <property type="method" value="X-ray"/>
    <property type="resolution" value="2.31 A"/>
    <property type="chains" value="B/D=1-445"/>
</dbReference>
<dbReference type="PDB" id="5SB6">
    <property type="method" value="X-ray"/>
    <property type="resolution" value="2.30 A"/>
    <property type="chains" value="B/D=1-445"/>
</dbReference>
<dbReference type="PDB" id="5SB7">
    <property type="method" value="X-ray"/>
    <property type="resolution" value="2.10 A"/>
    <property type="chains" value="B/D=1-445"/>
</dbReference>
<dbReference type="PDB" id="5SB8">
    <property type="method" value="X-ray"/>
    <property type="resolution" value="2.30 A"/>
    <property type="chains" value="B/D=1-445"/>
</dbReference>
<dbReference type="PDB" id="5SB9">
    <property type="method" value="X-ray"/>
    <property type="resolution" value="2.50 A"/>
    <property type="chains" value="B/D=1-445"/>
</dbReference>
<dbReference type="PDB" id="5SBA">
    <property type="method" value="X-ray"/>
    <property type="resolution" value="2.25 A"/>
    <property type="chains" value="B/D=1-445"/>
</dbReference>
<dbReference type="PDB" id="5SBB">
    <property type="method" value="X-ray"/>
    <property type="resolution" value="2.25 A"/>
    <property type="chains" value="B/D=1-445"/>
</dbReference>
<dbReference type="PDB" id="5SBC">
    <property type="method" value="X-ray"/>
    <property type="resolution" value="2.32 A"/>
    <property type="chains" value="B/D=1-445"/>
</dbReference>
<dbReference type="PDB" id="5SBD">
    <property type="method" value="X-ray"/>
    <property type="resolution" value="2.25 A"/>
    <property type="chains" value="B/D=1-445"/>
</dbReference>
<dbReference type="PDB" id="5SBE">
    <property type="method" value="X-ray"/>
    <property type="resolution" value="2.75 A"/>
    <property type="chains" value="B/D=1-445"/>
</dbReference>
<dbReference type="PDB" id="5XAF">
    <property type="method" value="X-ray"/>
    <property type="resolution" value="2.55 A"/>
    <property type="chains" value="B/D=1-445"/>
</dbReference>
<dbReference type="PDB" id="5XAG">
    <property type="method" value="X-ray"/>
    <property type="resolution" value="2.56 A"/>
    <property type="chains" value="B/D=1-445"/>
</dbReference>
<dbReference type="PDB" id="5XLT">
    <property type="method" value="X-ray"/>
    <property type="resolution" value="2.81 A"/>
    <property type="chains" value="B/D=1-445"/>
</dbReference>
<dbReference type="PDB" id="5XLZ">
    <property type="method" value="X-ray"/>
    <property type="resolution" value="2.30 A"/>
    <property type="chains" value="B/D=1-445"/>
</dbReference>
<dbReference type="PDB" id="5YZ3">
    <property type="method" value="X-ray"/>
    <property type="resolution" value="2.54 A"/>
    <property type="chains" value="B/D=1-445"/>
</dbReference>
<dbReference type="PDB" id="5Z4P">
    <property type="method" value="X-ray"/>
    <property type="resolution" value="2.50 A"/>
    <property type="chains" value="B=1-428, D=1-431"/>
</dbReference>
<dbReference type="PDB" id="5Z4U">
    <property type="method" value="X-ray"/>
    <property type="resolution" value="3.18 A"/>
    <property type="chains" value="B/D=1-445"/>
</dbReference>
<dbReference type="PDB" id="5ZXH">
    <property type="method" value="X-ray"/>
    <property type="resolution" value="2.80 A"/>
    <property type="chains" value="B/D=1-445"/>
</dbReference>
<dbReference type="PDB" id="6AGK">
    <property type="method" value="X-ray"/>
    <property type="resolution" value="2.80 A"/>
    <property type="chains" value="B/D=1-445"/>
</dbReference>
<dbReference type="PDB" id="6BBN">
    <property type="method" value="X-ray"/>
    <property type="resolution" value="3.51 A"/>
    <property type="chains" value="B/D=1-445"/>
</dbReference>
<dbReference type="PDB" id="6EG5">
    <property type="method" value="X-ray"/>
    <property type="resolution" value="2.45 A"/>
    <property type="chains" value="B/D=1-445"/>
</dbReference>
<dbReference type="PDB" id="6F7C">
    <property type="method" value="X-ray"/>
    <property type="resolution" value="2.00 A"/>
    <property type="chains" value="B/D=1-445"/>
</dbReference>
<dbReference type="PDB" id="6FII">
    <property type="method" value="X-ray"/>
    <property type="resolution" value="2.40 A"/>
    <property type="chains" value="B/D=1-445"/>
</dbReference>
<dbReference type="PDB" id="6FJF">
    <property type="method" value="X-ray"/>
    <property type="resolution" value="2.40 A"/>
    <property type="chains" value="B/D=1-445"/>
</dbReference>
<dbReference type="PDB" id="6FJM">
    <property type="method" value="X-ray"/>
    <property type="resolution" value="2.10 A"/>
    <property type="chains" value="B/D=1-445"/>
</dbReference>
<dbReference type="PDB" id="6FKJ">
    <property type="method" value="X-ray"/>
    <property type="resolution" value="2.15 A"/>
    <property type="chains" value="B/D=1-445"/>
</dbReference>
<dbReference type="PDB" id="6FKL">
    <property type="method" value="X-ray"/>
    <property type="resolution" value="2.10 A"/>
    <property type="chains" value="B/D=1-445"/>
</dbReference>
<dbReference type="PDB" id="6GF3">
    <property type="method" value="X-ray"/>
    <property type="resolution" value="2.40 A"/>
    <property type="chains" value="B/D=1-445"/>
</dbReference>
<dbReference type="PDB" id="6GJ4">
    <property type="method" value="X-ray"/>
    <property type="resolution" value="2.40 A"/>
    <property type="chains" value="B/D=1-445"/>
</dbReference>
<dbReference type="PDB" id="6GZE">
    <property type="method" value="X-ray"/>
    <property type="resolution" value="2.49 A"/>
    <property type="chains" value="B/D=1-445"/>
</dbReference>
<dbReference type="PDB" id="6HX8">
    <property type="method" value="X-ray"/>
    <property type="resolution" value="2.40 A"/>
    <property type="chains" value="B/D=1-445"/>
</dbReference>
<dbReference type="PDB" id="6I5C">
    <property type="method" value="X-ray"/>
    <property type="resolution" value="2.95 A"/>
    <property type="chains" value="B/D=1-445"/>
</dbReference>
<dbReference type="PDB" id="6JCJ">
    <property type="method" value="X-ray"/>
    <property type="resolution" value="2.50 A"/>
    <property type="chains" value="B/D=1-445"/>
</dbReference>
<dbReference type="PDB" id="6K9V">
    <property type="method" value="X-ray"/>
    <property type="resolution" value="2.54 A"/>
    <property type="chains" value="B/D=1-445"/>
</dbReference>
<dbReference type="PDB" id="6KNZ">
    <property type="method" value="X-ray"/>
    <property type="resolution" value="2.48 A"/>
    <property type="chains" value="B/D=1-445"/>
</dbReference>
<dbReference type="PDB" id="6N47">
    <property type="method" value="X-ray"/>
    <property type="resolution" value="2.60 A"/>
    <property type="chains" value="B/D=1-445"/>
</dbReference>
<dbReference type="PDB" id="6OJQ">
    <property type="method" value="EM"/>
    <property type="resolution" value="3.67 A"/>
    <property type="chains" value="B=1-426"/>
</dbReference>
<dbReference type="PDB" id="6QQN">
    <property type="method" value="X-ray"/>
    <property type="resolution" value="2.30 A"/>
    <property type="chains" value="B/D=1-445"/>
</dbReference>
<dbReference type="PDB" id="6QTN">
    <property type="method" value="X-ray"/>
    <property type="resolution" value="1.90 A"/>
    <property type="chains" value="B/D=1-445"/>
</dbReference>
<dbReference type="PDB" id="6REV">
    <property type="method" value="EM"/>
    <property type="resolution" value="3.80 A"/>
    <property type="chains" value="B/b=1-429"/>
</dbReference>
<dbReference type="PDB" id="6RF2">
    <property type="method" value="EM"/>
    <property type="resolution" value="4.20 A"/>
    <property type="chains" value="B/b=1-429"/>
</dbReference>
<dbReference type="PDB" id="6RF8">
    <property type="method" value="EM"/>
    <property type="resolution" value="3.80 A"/>
    <property type="chains" value="B/b=1-429"/>
</dbReference>
<dbReference type="PDB" id="6RFD">
    <property type="method" value="EM"/>
    <property type="resolution" value="3.90 A"/>
    <property type="chains" value="B/b=1-429"/>
</dbReference>
<dbReference type="PDB" id="6S8K">
    <property type="method" value="X-ray"/>
    <property type="resolution" value="1.52 A"/>
    <property type="chains" value="B=1-445"/>
</dbReference>
<dbReference type="PDB" id="6S9E">
    <property type="method" value="X-ray"/>
    <property type="resolution" value="2.25 A"/>
    <property type="chains" value="B/D=1-445"/>
</dbReference>
<dbReference type="PDB" id="6SES">
    <property type="method" value="X-ray"/>
    <property type="resolution" value="2.00 A"/>
    <property type="chains" value="B/D=1-445"/>
</dbReference>
<dbReference type="PDB" id="6WVL">
    <property type="method" value="EM"/>
    <property type="resolution" value="3.20 A"/>
    <property type="chains" value="B/D=1-445"/>
</dbReference>
<dbReference type="PDB" id="6WVM">
    <property type="method" value="EM"/>
    <property type="resolution" value="3.30 A"/>
    <property type="chains" value="B/D=1-445"/>
</dbReference>
<dbReference type="PDB" id="6WVR">
    <property type="method" value="EM"/>
    <property type="resolution" value="2.90 A"/>
    <property type="chains" value="B/D=1-445"/>
</dbReference>
<dbReference type="PDB" id="6Y6D">
    <property type="method" value="X-ray"/>
    <property type="resolution" value="2.20 A"/>
    <property type="chains" value="B/D=1-445"/>
</dbReference>
<dbReference type="PDB" id="6ZWB">
    <property type="method" value="X-ray"/>
    <property type="resolution" value="1.75 A"/>
    <property type="chains" value="B=1-445"/>
</dbReference>
<dbReference type="PDB" id="6ZWC">
    <property type="method" value="X-ray"/>
    <property type="resolution" value="2.04 A"/>
    <property type="chains" value="B=1-445"/>
</dbReference>
<dbReference type="PDB" id="7AC5">
    <property type="method" value="X-ray"/>
    <property type="resolution" value="2.26 A"/>
    <property type="chains" value="B=1-445"/>
</dbReference>
<dbReference type="PDB" id="7AU5">
    <property type="method" value="X-ray"/>
    <property type="resolution" value="2.20 A"/>
    <property type="chains" value="B/D=1-445"/>
</dbReference>
<dbReference type="PDB" id="7CPD">
    <property type="method" value="X-ray"/>
    <property type="resolution" value="2.51 A"/>
    <property type="chains" value="B/D=1-445"/>
</dbReference>
<dbReference type="PDB" id="7CPQ">
    <property type="method" value="X-ray"/>
    <property type="resolution" value="2.60 A"/>
    <property type="chains" value="B/D=1-445"/>
</dbReference>
<dbReference type="PDB" id="7E4P">
    <property type="method" value="X-ray"/>
    <property type="resolution" value="2.40 A"/>
    <property type="chains" value="B/D=1-431"/>
</dbReference>
<dbReference type="PDB" id="7E4Q">
    <property type="method" value="X-ray"/>
    <property type="resolution" value="2.50 A"/>
    <property type="chains" value="B/D=1-431"/>
</dbReference>
<dbReference type="PDB" id="7E4R">
    <property type="method" value="X-ray"/>
    <property type="resolution" value="2.60 A"/>
    <property type="chains" value="B/D=1-431"/>
</dbReference>
<dbReference type="PDB" id="7E4Y">
    <property type="method" value="X-ray"/>
    <property type="resolution" value="2.71 A"/>
    <property type="chains" value="B/D=1-431"/>
</dbReference>
<dbReference type="PDB" id="7E4Z">
    <property type="method" value="X-ray"/>
    <property type="resolution" value="2.69 A"/>
    <property type="chains" value="B/D=1-431"/>
</dbReference>
<dbReference type="PDB" id="7EN3">
    <property type="method" value="X-ray"/>
    <property type="resolution" value="2.64 A"/>
    <property type="chains" value="B/D=1-445"/>
</dbReference>
<dbReference type="PDB" id="7JFR">
    <property type="method" value="X-ray"/>
    <property type="resolution" value="2.35 A"/>
    <property type="chains" value="B/D=1-445"/>
</dbReference>
<dbReference type="PDB" id="7OGN">
    <property type="method" value="X-ray"/>
    <property type="resolution" value="2.20 A"/>
    <property type="chains" value="B/D=1-445"/>
</dbReference>
<dbReference type="PDB" id="7VMG">
    <property type="method" value="X-ray"/>
    <property type="resolution" value="2.39 A"/>
    <property type="chains" value="B/D=1-445"/>
</dbReference>
<dbReference type="PDB" id="7VMJ">
    <property type="method" value="X-ray"/>
    <property type="resolution" value="2.90 A"/>
    <property type="chains" value="B/D=1-445"/>
</dbReference>
<dbReference type="PDB" id="7VMK">
    <property type="method" value="X-ray"/>
    <property type="resolution" value="2.50 A"/>
    <property type="chains" value="B/D=1-445"/>
</dbReference>
<dbReference type="PDB" id="7YYY">
    <property type="method" value="X-ray"/>
    <property type="resolution" value="2.20 A"/>
    <property type="chains" value="B=1-445"/>
</dbReference>
<dbReference type="PDB" id="7YYZ">
    <property type="method" value="X-ray"/>
    <property type="resolution" value="2.20 A"/>
    <property type="chains" value="B=1-445"/>
</dbReference>
<dbReference type="PDB" id="7YZ0">
    <property type="method" value="X-ray"/>
    <property type="resolution" value="2.20 A"/>
    <property type="chains" value="B=1-445"/>
</dbReference>
<dbReference type="PDB" id="7YZ1">
    <property type="method" value="X-ray"/>
    <property type="resolution" value="2.20 A"/>
    <property type="chains" value="B=1-445"/>
</dbReference>
<dbReference type="PDB" id="7YZ2">
    <property type="method" value="X-ray"/>
    <property type="resolution" value="2.20 A"/>
    <property type="chains" value="B=1-445"/>
</dbReference>
<dbReference type="PDB" id="7YZ3">
    <property type="method" value="X-ray"/>
    <property type="resolution" value="1.80 A"/>
    <property type="chains" value="B=1-445"/>
</dbReference>
<dbReference type="PDB" id="7YZ5">
    <property type="method" value="X-ray"/>
    <property type="resolution" value="2.11 A"/>
    <property type="chains" value="B=1-445"/>
</dbReference>
<dbReference type="PDB" id="7YZ6">
    <property type="method" value="X-ray"/>
    <property type="resolution" value="2.10 A"/>
    <property type="chains" value="B=1-445"/>
</dbReference>
<dbReference type="PDB" id="7Z01">
    <property type="method" value="X-ray"/>
    <property type="resolution" value="1.82 A"/>
    <property type="chains" value="B=1-445"/>
</dbReference>
<dbReference type="PDB" id="7Z02">
    <property type="method" value="X-ray"/>
    <property type="resolution" value="2.36 A"/>
    <property type="chains" value="B=1-445"/>
</dbReference>
<dbReference type="PDB" id="7Z2N">
    <property type="method" value="X-ray"/>
    <property type="resolution" value="2.17 A"/>
    <property type="chains" value="B/D=1-445"/>
</dbReference>
<dbReference type="PDB" id="7Z2P">
    <property type="method" value="X-ray"/>
    <property type="resolution" value="2.00 A"/>
    <property type="chains" value="B/D=1-445"/>
</dbReference>
<dbReference type="PDB" id="7Z7D">
    <property type="method" value="X-ray"/>
    <property type="resolution" value="2.00 A"/>
    <property type="chains" value="B/D=1-445"/>
</dbReference>
<dbReference type="PDB" id="7ZX2">
    <property type="method" value="X-ray"/>
    <property type="resolution" value="2.50 A"/>
    <property type="chains" value="B/D=1-445"/>
</dbReference>
<dbReference type="PDB" id="7ZYW">
    <property type="method" value="X-ray"/>
    <property type="resolution" value="2.45 A"/>
    <property type="chains" value="B/D=1-445"/>
</dbReference>
<dbReference type="PDB" id="8A0L">
    <property type="method" value="X-ray"/>
    <property type="resolution" value="2.00 A"/>
    <property type="chains" value="B/D=1-445"/>
</dbReference>
<dbReference type="PDB" id="8A9T">
    <property type="method" value="X-ray"/>
    <property type="resolution" value="2.30 A"/>
    <property type="chains" value="B/D=1-445"/>
</dbReference>
<dbReference type="PDB" id="8A9Z">
    <property type="method" value="X-ray"/>
    <property type="resolution" value="2.29 A"/>
    <property type="chains" value="B/D=1-445"/>
</dbReference>
<dbReference type="PDB" id="8AHM">
    <property type="method" value="X-ray"/>
    <property type="resolution" value="2.42 A"/>
    <property type="chains" value="B/D=1-445"/>
</dbReference>
<dbReference type="PDB" id="8ASN">
    <property type="method" value="X-ray"/>
    <property type="resolution" value="2.57 A"/>
    <property type="chains" value="B/D=1-445"/>
</dbReference>
<dbReference type="PDB" id="8B7A">
    <property type="method" value="X-ray"/>
    <property type="resolution" value="2.25 A"/>
    <property type="chains" value="B/D=1-445"/>
</dbReference>
<dbReference type="PDB" id="8B7B">
    <property type="method" value="X-ray"/>
    <property type="resolution" value="2.25 A"/>
    <property type="chains" value="B/D=1-445"/>
</dbReference>
<dbReference type="PDB" id="8B7C">
    <property type="method" value="X-ray"/>
    <property type="resolution" value="1.90 A"/>
    <property type="chains" value="B/D=1-445"/>
</dbReference>
<dbReference type="PDB" id="8BDE">
    <property type="method" value="X-ray"/>
    <property type="resolution" value="1.90 A"/>
    <property type="chains" value="B/D=1-445"/>
</dbReference>
<dbReference type="PDB" id="8BDF">
    <property type="method" value="X-ray"/>
    <property type="resolution" value="1.95 A"/>
    <property type="chains" value="B/D=1-445"/>
</dbReference>
<dbReference type="PDB" id="8BDG">
    <property type="method" value="X-ray"/>
    <property type="resolution" value="2.35 A"/>
    <property type="chains" value="B/D=1-445"/>
</dbReference>
<dbReference type="PDB" id="8C0F">
    <property type="method" value="X-ray"/>
    <property type="resolution" value="2.10 A"/>
    <property type="chains" value="B/D=1-445"/>
</dbReference>
<dbReference type="PDB" id="8CL9">
    <property type="method" value="X-ray"/>
    <property type="resolution" value="2.50 A"/>
    <property type="chains" value="B=1-431"/>
</dbReference>
<dbReference type="PDB" id="8CLA">
    <property type="method" value="X-ray"/>
    <property type="resolution" value="2.00 A"/>
    <property type="chains" value="B=1-431"/>
</dbReference>
<dbReference type="PDB" id="8CLB">
    <property type="method" value="X-ray"/>
    <property type="resolution" value="3.00 A"/>
    <property type="chains" value="B/D=1-431"/>
</dbReference>
<dbReference type="PDB" id="8CLC">
    <property type="method" value="X-ray"/>
    <property type="resolution" value="2.70 A"/>
    <property type="chains" value="B/D=2-431"/>
</dbReference>
<dbReference type="PDB" id="8CLD">
    <property type="method" value="X-ray"/>
    <property type="resolution" value="3.20 A"/>
    <property type="chains" value="B/D=1-445"/>
</dbReference>
<dbReference type="PDB" id="8CLE">
    <property type="method" value="X-ray"/>
    <property type="resolution" value="3.20 A"/>
    <property type="chains" value="B/D=1-431"/>
</dbReference>
<dbReference type="PDB" id="8CLF">
    <property type="method" value="X-ray"/>
    <property type="resolution" value="2.70 A"/>
    <property type="chains" value="B/D=1-431"/>
</dbReference>
<dbReference type="PDB" id="8CLG">
    <property type="method" value="X-ray"/>
    <property type="resolution" value="2.80 A"/>
    <property type="chains" value="B/D=1-431"/>
</dbReference>
<dbReference type="PDB" id="8CLH">
    <property type="method" value="X-ray"/>
    <property type="resolution" value="2.50 A"/>
    <property type="chains" value="B/D=2-431"/>
</dbReference>
<dbReference type="PDB" id="8HUH">
    <property type="method" value="X-ray"/>
    <property type="resolution" value="2.80 A"/>
    <property type="chains" value="B/D=1-445"/>
</dbReference>
<dbReference type="PDB" id="8QEA">
    <property type="method" value="X-ray"/>
    <property type="resolution" value="1.80 A"/>
    <property type="chains" value="B=1-445"/>
</dbReference>
<dbReference type="PDB" id="8QL2">
    <property type="method" value="X-ray"/>
    <property type="resolution" value="1.70 A"/>
    <property type="chains" value="B=1-445"/>
</dbReference>
<dbReference type="PDB" id="8QL3">
    <property type="method" value="X-ray"/>
    <property type="resolution" value="1.80 A"/>
    <property type="chains" value="B=1-445"/>
</dbReference>
<dbReference type="PDB" id="8QL4">
    <property type="method" value="X-ray"/>
    <property type="resolution" value="1.80 A"/>
    <property type="chains" value="B=1-445"/>
</dbReference>
<dbReference type="PDB" id="8QL5">
    <property type="method" value="X-ray"/>
    <property type="resolution" value="1.80 A"/>
    <property type="chains" value="B=1-445"/>
</dbReference>
<dbReference type="PDB" id="8QL6">
    <property type="method" value="X-ray"/>
    <property type="resolution" value="1.80 A"/>
    <property type="chains" value="B=1-445"/>
</dbReference>
<dbReference type="PDB" id="8QL7">
    <property type="method" value="X-ray"/>
    <property type="resolution" value="1.80 A"/>
    <property type="chains" value="B=1-445"/>
</dbReference>
<dbReference type="PDB" id="8QL8">
    <property type="method" value="X-ray"/>
    <property type="resolution" value="1.80 A"/>
    <property type="chains" value="B=1-445"/>
</dbReference>
<dbReference type="PDB" id="8QL9">
    <property type="method" value="X-ray"/>
    <property type="resolution" value="1.80 A"/>
    <property type="chains" value="B=1-445"/>
</dbReference>
<dbReference type="PDB" id="8QLA">
    <property type="method" value="X-ray"/>
    <property type="resolution" value="1.80 A"/>
    <property type="chains" value="B=1-445"/>
</dbReference>
<dbReference type="PDB" id="8QLB">
    <property type="method" value="X-ray"/>
    <property type="resolution" value="1.80 A"/>
    <property type="chains" value="B=1-431"/>
</dbReference>
<dbReference type="PDB" id="8R67">
    <property type="method" value="X-ray"/>
    <property type="resolution" value="2.20 A"/>
    <property type="chains" value="B/D=1-445"/>
</dbReference>
<dbReference type="PDB" id="8R6O">
    <property type="method" value="X-ray"/>
    <property type="resolution" value="2.20 A"/>
    <property type="chains" value="B/D=1-445"/>
</dbReference>
<dbReference type="PDB" id="8RIV">
    <property type="method" value="X-ray"/>
    <property type="resolution" value="2.78 A"/>
    <property type="chains" value="B/D=1-445"/>
</dbReference>
<dbReference type="PDB" id="8RIW">
    <property type="method" value="X-ray"/>
    <property type="resolution" value="2.57 A"/>
    <property type="chains" value="B/D=1-445"/>
</dbReference>
<dbReference type="PDB" id="9F8G">
    <property type="method" value="X-ray"/>
    <property type="resolution" value="2.20 A"/>
    <property type="chains" value="B=1-445"/>
</dbReference>
<dbReference type="PDB" id="9FYD">
    <property type="method" value="X-ray"/>
    <property type="resolution" value="2.30 A"/>
    <property type="chains" value="B/D=1-445"/>
</dbReference>
<dbReference type="PDBsum" id="1SA0"/>
<dbReference type="PDBsum" id="1SA1"/>
<dbReference type="PDBsum" id="1TVK"/>
<dbReference type="PDBsum" id="1Z2B"/>
<dbReference type="PDBsum" id="2P4N"/>
<dbReference type="PDBsum" id="2WBE"/>
<dbReference type="PDBsum" id="2XRP"/>
<dbReference type="PDBsum" id="3DCO"/>
<dbReference type="PDBsum" id="3DU7"/>
<dbReference type="PDBsum" id="3E22"/>
<dbReference type="PDBsum" id="3IZ0"/>
<dbReference type="PDBsum" id="3J1T"/>
<dbReference type="PDBsum" id="3J1U"/>
<dbReference type="PDBsum" id="3J2U"/>
<dbReference type="PDBsum" id="4AQV"/>
<dbReference type="PDBsum" id="4AQW"/>
<dbReference type="PDBsum" id="4ATU"/>
<dbReference type="PDBsum" id="4ATX"/>
<dbReference type="PDBsum" id="4CK5"/>
<dbReference type="PDBsum" id="4CK6"/>
<dbReference type="PDBsum" id="4CK7"/>
<dbReference type="PDBsum" id="4I4T"/>
<dbReference type="PDBsum" id="4I50"/>
<dbReference type="PDBsum" id="4I55"/>
<dbReference type="PDBsum" id="4IHJ"/>
<dbReference type="PDBsum" id="4IIJ"/>
<dbReference type="PDBsum" id="4O2A"/>
<dbReference type="PDBsum" id="4O2B"/>
<dbReference type="PDBsum" id="4O4H"/>
<dbReference type="PDBsum" id="4O4I"/>
<dbReference type="PDBsum" id="4O4J"/>
<dbReference type="PDBsum" id="4O4L"/>
<dbReference type="PDBsum" id="4TUY"/>
<dbReference type="PDBsum" id="4TV8"/>
<dbReference type="PDBsum" id="4TV9"/>
<dbReference type="PDBsum" id="4UXO"/>
<dbReference type="PDBsum" id="4UXP"/>
<dbReference type="PDBsum" id="4UXR"/>
<dbReference type="PDBsum" id="4UXS"/>
<dbReference type="PDBsum" id="4UXT"/>
<dbReference type="PDBsum" id="4UXY"/>
<dbReference type="PDBsum" id="4UY0"/>
<dbReference type="PDBsum" id="4YJ2"/>
<dbReference type="PDBsum" id="4YJ3"/>
<dbReference type="PDBsum" id="5EIB"/>
<dbReference type="PDBsum" id="5EZY"/>
<dbReference type="PDBsum" id="5GON"/>
<dbReference type="PDBsum" id="5H74"/>
<dbReference type="PDBsum" id="5H7O"/>
<dbReference type="PDBsum" id="5ITZ"/>
<dbReference type="PDBsum" id="5IYZ"/>
<dbReference type="PDBsum" id="5J2T"/>
<dbReference type="PDBsum" id="5J2U"/>
<dbReference type="PDBsum" id="5JH7"/>
<dbReference type="PDBsum" id="5JVD"/>
<dbReference type="PDBsum" id="5LA6"/>
<dbReference type="PDBsum" id="5LOV"/>
<dbReference type="PDBsum" id="5LP6"/>
<dbReference type="PDBsum" id="5LXS"/>
<dbReference type="PDBsum" id="5LXT"/>
<dbReference type="PDBsum" id="5LYJ"/>
<dbReference type="PDBsum" id="5M50"/>
<dbReference type="PDBsum" id="5M54"/>
<dbReference type="PDBsum" id="5M5C"/>
<dbReference type="PDBsum" id="5M5I"/>
<dbReference type="PDBsum" id="5M5L"/>
<dbReference type="PDBsum" id="5M5M"/>
<dbReference type="PDBsum" id="5M5N"/>
<dbReference type="PDBsum" id="5M5O"/>
<dbReference type="PDBsum" id="5M7E"/>
<dbReference type="PDBsum" id="5M7G"/>
<dbReference type="PDBsum" id="5M8D"/>
<dbReference type="PDBsum" id="5M8G"/>
<dbReference type="PDBsum" id="5MF4"/>
<dbReference type="PDBsum" id="5ND2"/>
<dbReference type="PDBsum" id="5ND3"/>
<dbReference type="PDBsum" id="5ND4"/>
<dbReference type="PDBsum" id="5ND7"/>
<dbReference type="PDBsum" id="5NFZ"/>
<dbReference type="PDBsum" id="5NG1"/>
<dbReference type="PDBsum" id="5NJH"/>
<dbReference type="PDBsum" id="5NM5"/>
<dbReference type="PDBsum" id="5NQT"/>
<dbReference type="PDBsum" id="5NQU"/>
<dbReference type="PDBsum" id="5O7A"/>
<dbReference type="PDBsum" id="5OSK"/>
<dbReference type="PDBsum" id="5OV7"/>
<dbReference type="PDBsum" id="5S4L"/>
<dbReference type="PDBsum" id="5S4M"/>
<dbReference type="PDBsum" id="5S4N"/>
<dbReference type="PDBsum" id="5S4O"/>
<dbReference type="PDBsum" id="5S4P"/>
<dbReference type="PDBsum" id="5S4Q"/>
<dbReference type="PDBsum" id="5S4R"/>
<dbReference type="PDBsum" id="5S4S"/>
<dbReference type="PDBsum" id="5S4T"/>
<dbReference type="PDBsum" id="5S4U"/>
<dbReference type="PDBsum" id="5S4V"/>
<dbReference type="PDBsum" id="5S4W"/>
<dbReference type="PDBsum" id="5S4X"/>
<dbReference type="PDBsum" id="5S4Y"/>
<dbReference type="PDBsum" id="5S4Z"/>
<dbReference type="PDBsum" id="5S50"/>
<dbReference type="PDBsum" id="5S51"/>
<dbReference type="PDBsum" id="5S52"/>
<dbReference type="PDBsum" id="5S53"/>
<dbReference type="PDBsum" id="5S54"/>
<dbReference type="PDBsum" id="5S55"/>
<dbReference type="PDBsum" id="5S56"/>
<dbReference type="PDBsum" id="5S57"/>
<dbReference type="PDBsum" id="5S58"/>
<dbReference type="PDBsum" id="5S59"/>
<dbReference type="PDBsum" id="5S5A"/>
<dbReference type="PDBsum" id="5S5B"/>
<dbReference type="PDBsum" id="5S5C"/>
<dbReference type="PDBsum" id="5S5D"/>
<dbReference type="PDBsum" id="5S5E"/>
<dbReference type="PDBsum" id="5S5F"/>
<dbReference type="PDBsum" id="5S5G"/>
<dbReference type="PDBsum" id="5S5H"/>
<dbReference type="PDBsum" id="5S5I"/>
<dbReference type="PDBsum" id="5S5J"/>
<dbReference type="PDBsum" id="5S5K"/>
<dbReference type="PDBsum" id="5S5L"/>
<dbReference type="PDBsum" id="5S5M"/>
<dbReference type="PDBsum" id="5S5N"/>
<dbReference type="PDBsum" id="5S5O"/>
<dbReference type="PDBsum" id="5S5P"/>
<dbReference type="PDBsum" id="5S5Q"/>
<dbReference type="PDBsum" id="5S5R"/>
<dbReference type="PDBsum" id="5S5S"/>
<dbReference type="PDBsum" id="5S5T"/>
<dbReference type="PDBsum" id="5S5U"/>
<dbReference type="PDBsum" id="5S5V"/>
<dbReference type="PDBsum" id="5S5W"/>
<dbReference type="PDBsum" id="5S5X"/>
<dbReference type="PDBsum" id="5S5Y"/>
<dbReference type="PDBsum" id="5S5Z"/>
<dbReference type="PDBsum" id="5S60"/>
<dbReference type="PDBsum" id="5S61"/>
<dbReference type="PDBsum" id="5S62"/>
<dbReference type="PDBsum" id="5S63"/>
<dbReference type="PDBsum" id="5S64"/>
<dbReference type="PDBsum" id="5S65"/>
<dbReference type="PDBsum" id="5S66"/>
<dbReference type="PDBsum" id="5S67"/>
<dbReference type="PDBsum" id="5SB3"/>
<dbReference type="PDBsum" id="5SB4"/>
<dbReference type="PDBsum" id="5SB5"/>
<dbReference type="PDBsum" id="5SB6"/>
<dbReference type="PDBsum" id="5SB7"/>
<dbReference type="PDBsum" id="5SB8"/>
<dbReference type="PDBsum" id="5SB9"/>
<dbReference type="PDBsum" id="5SBA"/>
<dbReference type="PDBsum" id="5SBB"/>
<dbReference type="PDBsum" id="5SBC"/>
<dbReference type="PDBsum" id="5SBD"/>
<dbReference type="PDBsum" id="5SBE"/>
<dbReference type="PDBsum" id="5XAF"/>
<dbReference type="PDBsum" id="5XAG"/>
<dbReference type="PDBsum" id="5XLT"/>
<dbReference type="PDBsum" id="5XLZ"/>
<dbReference type="PDBsum" id="5YZ3"/>
<dbReference type="PDBsum" id="5Z4P"/>
<dbReference type="PDBsum" id="5Z4U"/>
<dbReference type="PDBsum" id="5ZXH"/>
<dbReference type="PDBsum" id="6AGK"/>
<dbReference type="PDBsum" id="6BBN"/>
<dbReference type="PDBsum" id="6EG5"/>
<dbReference type="PDBsum" id="6F7C"/>
<dbReference type="PDBsum" id="6FII"/>
<dbReference type="PDBsum" id="6FJF"/>
<dbReference type="PDBsum" id="6FJM"/>
<dbReference type="PDBsum" id="6FKJ"/>
<dbReference type="PDBsum" id="6FKL"/>
<dbReference type="PDBsum" id="6GF3"/>
<dbReference type="PDBsum" id="6GJ4"/>
<dbReference type="PDBsum" id="6GZE"/>
<dbReference type="PDBsum" id="6HX8"/>
<dbReference type="PDBsum" id="6I5C"/>
<dbReference type="PDBsum" id="6JCJ"/>
<dbReference type="PDBsum" id="6K9V"/>
<dbReference type="PDBsum" id="6KNZ"/>
<dbReference type="PDBsum" id="6N47"/>
<dbReference type="PDBsum" id="6OJQ"/>
<dbReference type="PDBsum" id="6QQN"/>
<dbReference type="PDBsum" id="6QTN"/>
<dbReference type="PDBsum" id="6REV"/>
<dbReference type="PDBsum" id="6RF2"/>
<dbReference type="PDBsum" id="6RF8"/>
<dbReference type="PDBsum" id="6RFD"/>
<dbReference type="PDBsum" id="6S8K"/>
<dbReference type="PDBsum" id="6S9E"/>
<dbReference type="PDBsum" id="6SES"/>
<dbReference type="PDBsum" id="6WVL"/>
<dbReference type="PDBsum" id="6WVM"/>
<dbReference type="PDBsum" id="6WVR"/>
<dbReference type="PDBsum" id="6Y6D"/>
<dbReference type="PDBsum" id="6ZWB"/>
<dbReference type="PDBsum" id="6ZWC"/>
<dbReference type="PDBsum" id="7AC5"/>
<dbReference type="PDBsum" id="7AU5"/>
<dbReference type="PDBsum" id="7CPD"/>
<dbReference type="PDBsum" id="7CPQ"/>
<dbReference type="PDBsum" id="7E4P"/>
<dbReference type="PDBsum" id="7E4Q"/>
<dbReference type="PDBsum" id="7E4R"/>
<dbReference type="PDBsum" id="7E4Y"/>
<dbReference type="PDBsum" id="7E4Z"/>
<dbReference type="PDBsum" id="7EN3"/>
<dbReference type="PDBsum" id="7JFR"/>
<dbReference type="PDBsum" id="7OGN"/>
<dbReference type="PDBsum" id="7VMG"/>
<dbReference type="PDBsum" id="7VMJ"/>
<dbReference type="PDBsum" id="7VMK"/>
<dbReference type="PDBsum" id="7YYY"/>
<dbReference type="PDBsum" id="7YYZ"/>
<dbReference type="PDBsum" id="7YZ0"/>
<dbReference type="PDBsum" id="7YZ1"/>
<dbReference type="PDBsum" id="7YZ2"/>
<dbReference type="PDBsum" id="7YZ3"/>
<dbReference type="PDBsum" id="7YZ5"/>
<dbReference type="PDBsum" id="7YZ6"/>
<dbReference type="PDBsum" id="7Z01"/>
<dbReference type="PDBsum" id="7Z02"/>
<dbReference type="PDBsum" id="7Z2N"/>
<dbReference type="PDBsum" id="7Z2P"/>
<dbReference type="PDBsum" id="7Z7D"/>
<dbReference type="PDBsum" id="7ZX2"/>
<dbReference type="PDBsum" id="7ZYW"/>
<dbReference type="PDBsum" id="8A0L"/>
<dbReference type="PDBsum" id="8A9T"/>
<dbReference type="PDBsum" id="8A9Z"/>
<dbReference type="PDBsum" id="8AHM"/>
<dbReference type="PDBsum" id="8ASN"/>
<dbReference type="PDBsum" id="8B7A"/>
<dbReference type="PDBsum" id="8B7B"/>
<dbReference type="PDBsum" id="8B7C"/>
<dbReference type="PDBsum" id="8BDE"/>
<dbReference type="PDBsum" id="8BDF"/>
<dbReference type="PDBsum" id="8BDG"/>
<dbReference type="PDBsum" id="8C0F"/>
<dbReference type="PDBsum" id="8CL9"/>
<dbReference type="PDBsum" id="8CLA"/>
<dbReference type="PDBsum" id="8CLB"/>
<dbReference type="PDBsum" id="8CLC"/>
<dbReference type="PDBsum" id="8CLD"/>
<dbReference type="PDBsum" id="8CLE"/>
<dbReference type="PDBsum" id="8CLF"/>
<dbReference type="PDBsum" id="8CLG"/>
<dbReference type="PDBsum" id="8CLH"/>
<dbReference type="PDBsum" id="8HUH"/>
<dbReference type="PDBsum" id="8QEA"/>
<dbReference type="PDBsum" id="8QL2"/>
<dbReference type="PDBsum" id="8QL3"/>
<dbReference type="PDBsum" id="8QL4"/>
<dbReference type="PDBsum" id="8QL5"/>
<dbReference type="PDBsum" id="8QL6"/>
<dbReference type="PDBsum" id="8QL7"/>
<dbReference type="PDBsum" id="8QL8"/>
<dbReference type="PDBsum" id="8QL9"/>
<dbReference type="PDBsum" id="8QLA"/>
<dbReference type="PDBsum" id="8QLB"/>
<dbReference type="PDBsum" id="8R67"/>
<dbReference type="PDBsum" id="8R6O"/>
<dbReference type="PDBsum" id="8RIV"/>
<dbReference type="PDBsum" id="8RIW"/>
<dbReference type="PDBsum" id="9F8G"/>
<dbReference type="PDBsum" id="9FYD"/>
<dbReference type="EMDB" id="EMD-1340"/>
<dbReference type="EMDB" id="EMD-1788"/>
<dbReference type="EMDB" id="EMD-20092"/>
<dbReference type="EMDB" id="EMD-2078"/>
<dbReference type="EMDB" id="EMD-2095"/>
<dbReference type="EMDB" id="EMD-2098"/>
<dbReference type="EMDB" id="EMD-21919"/>
<dbReference type="EMDB" id="EMD-2533"/>
<dbReference type="EMDB" id="EMD-2534"/>
<dbReference type="EMDB" id="EMD-2535"/>
<dbReference type="EMDB" id="EMD-2536"/>
<dbReference type="EMDB" id="EMD-2537"/>
<dbReference type="EMDB" id="EMD-2538"/>
<dbReference type="EMDB" id="EMD-2539"/>
<dbReference type="EMDB" id="EMD-2540"/>
<dbReference type="EMDB" id="EMD-2541"/>
<dbReference type="EMDB" id="EMD-2542"/>
<dbReference type="EMDB" id="EMD-2765"/>
<dbReference type="EMDB" id="EMD-2766"/>
<dbReference type="EMDB" id="EMD-2767"/>
<dbReference type="EMDB" id="EMD-2768"/>
<dbReference type="EMDB" id="EMD-2769"/>
<dbReference type="EMDB" id="EMD-2770"/>
<dbReference type="EMDB" id="EMD-2771"/>
<dbReference type="EMDB" id="EMD-3444"/>
<dbReference type="EMDB" id="EMD-3445"/>
<dbReference type="EMDB" id="EMD-3620"/>
<dbReference type="EMDB" id="EMD-3621"/>
<dbReference type="EMDB" id="EMD-3622"/>
<dbReference type="EMDB" id="EMD-3623"/>
<dbReference type="EMDB" id="EMD-4154"/>
<dbReference type="EMDB" id="EMD-4156"/>
<dbReference type="EMDB" id="EMD-4858"/>
<dbReference type="EMDB" id="EMD-4861"/>
<dbReference type="EMDB" id="EMD-4862"/>
<dbReference type="EMDB" id="EMD-4863"/>
<dbReference type="EMDB" id="EMD-5565"/>
<dbReference type="EMDB" id="EMD-8059"/>
<dbReference type="EMDB" id="EMD-8060"/>
<dbReference type="EMDB" id="EMD-8061"/>
<dbReference type="SASBDB" id="Q6B856"/>
<dbReference type="SMR" id="Q6B856"/>
<dbReference type="BioGRID" id="158875">
    <property type="interactions" value="3"/>
</dbReference>
<dbReference type="DIP" id="DIP-47524N"/>
<dbReference type="FunCoup" id="Q6B856">
    <property type="interactions" value="763"/>
</dbReference>
<dbReference type="IntAct" id="Q6B856">
    <property type="interactions" value="6"/>
</dbReference>
<dbReference type="MINT" id="Q6B856"/>
<dbReference type="STRING" id="9913.ENSBTAP00000030869"/>
<dbReference type="BindingDB" id="Q6B856"/>
<dbReference type="ChEMBL" id="CHEMBL3394"/>
<dbReference type="DrugCentral" id="Q6B856"/>
<dbReference type="iPTMnet" id="Q6B856"/>
<dbReference type="PaxDb" id="9913-ENSBTAP00000005346"/>
<dbReference type="PeptideAtlas" id="Q6B856"/>
<dbReference type="ABCD" id="Q6B856">
    <property type="antibodies" value="1 sequenced antibody"/>
</dbReference>
<dbReference type="GeneID" id="281555"/>
<dbReference type="KEGG" id="bta:281555"/>
<dbReference type="CTD" id="347733"/>
<dbReference type="eggNOG" id="KOG1375">
    <property type="taxonomic scope" value="Eukaryota"/>
</dbReference>
<dbReference type="InParanoid" id="Q6B856"/>
<dbReference type="OrthoDB" id="9820562at2759"/>
<dbReference type="TreeFam" id="TF300298"/>
<dbReference type="EvolutionaryTrace" id="Q6B856"/>
<dbReference type="PRO" id="PR:Q6B856"/>
<dbReference type="Proteomes" id="UP000009136">
    <property type="component" value="Unplaced"/>
</dbReference>
<dbReference type="GO" id="GO:0005737">
    <property type="term" value="C:cytoplasm"/>
    <property type="evidence" value="ECO:0000318"/>
    <property type="project" value="GO_Central"/>
</dbReference>
<dbReference type="GO" id="GO:0005874">
    <property type="term" value="C:microtubule"/>
    <property type="evidence" value="ECO:0000318"/>
    <property type="project" value="GO_Central"/>
</dbReference>
<dbReference type="GO" id="GO:0015630">
    <property type="term" value="C:microtubule cytoskeleton"/>
    <property type="evidence" value="ECO:0000250"/>
    <property type="project" value="UniProtKB"/>
</dbReference>
<dbReference type="GO" id="GO:0005525">
    <property type="term" value="F:GTP binding"/>
    <property type="evidence" value="ECO:0000318"/>
    <property type="project" value="GO_Central"/>
</dbReference>
<dbReference type="GO" id="GO:0003924">
    <property type="term" value="F:GTPase activity"/>
    <property type="evidence" value="ECO:0007669"/>
    <property type="project" value="InterPro"/>
</dbReference>
<dbReference type="GO" id="GO:0046872">
    <property type="term" value="F:metal ion binding"/>
    <property type="evidence" value="ECO:0007669"/>
    <property type="project" value="UniProtKB-KW"/>
</dbReference>
<dbReference type="GO" id="GO:0046982">
    <property type="term" value="F:protein heterodimerization activity"/>
    <property type="evidence" value="ECO:0000250"/>
    <property type="project" value="UniProtKB"/>
</dbReference>
<dbReference type="GO" id="GO:0005200">
    <property type="term" value="F:structural constituent of cytoskeleton"/>
    <property type="evidence" value="ECO:0000318"/>
    <property type="project" value="GO_Central"/>
</dbReference>
<dbReference type="GO" id="GO:0000226">
    <property type="term" value="P:microtubule cytoskeleton organization"/>
    <property type="evidence" value="ECO:0000318"/>
    <property type="project" value="GO_Central"/>
</dbReference>
<dbReference type="GO" id="GO:0007017">
    <property type="term" value="P:microtubule-based process"/>
    <property type="evidence" value="ECO:0000250"/>
    <property type="project" value="UniProtKB"/>
</dbReference>
<dbReference type="GO" id="GO:0000278">
    <property type="term" value="P:mitotic cell cycle"/>
    <property type="evidence" value="ECO:0000318"/>
    <property type="project" value="GO_Central"/>
</dbReference>
<dbReference type="GO" id="GO:0001764">
    <property type="term" value="P:neuron migration"/>
    <property type="evidence" value="ECO:0000318"/>
    <property type="project" value="GO_Central"/>
</dbReference>
<dbReference type="GO" id="GO:1902669">
    <property type="term" value="P:positive regulation of axon guidance"/>
    <property type="evidence" value="ECO:0000250"/>
    <property type="project" value="UniProtKB"/>
</dbReference>
<dbReference type="CDD" id="cd02187">
    <property type="entry name" value="beta_tubulin"/>
    <property type="match status" value="1"/>
</dbReference>
<dbReference type="FunFam" id="1.10.287.600:FF:000006">
    <property type="entry name" value="Tubulin beta chain"/>
    <property type="match status" value="1"/>
</dbReference>
<dbReference type="FunFam" id="3.30.1330.20:FF:000002">
    <property type="entry name" value="Tubulin beta chain"/>
    <property type="match status" value="1"/>
</dbReference>
<dbReference type="FunFam" id="3.40.50.1440:FF:000003">
    <property type="entry name" value="Tubulin beta chain"/>
    <property type="match status" value="1"/>
</dbReference>
<dbReference type="Gene3D" id="1.10.287.600">
    <property type="entry name" value="Helix hairpin bin"/>
    <property type="match status" value="1"/>
</dbReference>
<dbReference type="Gene3D" id="3.30.1330.20">
    <property type="entry name" value="Tubulin/FtsZ, C-terminal domain"/>
    <property type="match status" value="1"/>
</dbReference>
<dbReference type="Gene3D" id="3.40.50.1440">
    <property type="entry name" value="Tubulin/FtsZ, GTPase domain"/>
    <property type="match status" value="1"/>
</dbReference>
<dbReference type="InterPro" id="IPR013838">
    <property type="entry name" value="Beta-tubulin_BS"/>
</dbReference>
<dbReference type="InterPro" id="IPR002453">
    <property type="entry name" value="Beta_tubulin"/>
</dbReference>
<dbReference type="InterPro" id="IPR008280">
    <property type="entry name" value="Tub_FtsZ_C"/>
</dbReference>
<dbReference type="InterPro" id="IPR000217">
    <property type="entry name" value="Tubulin"/>
</dbReference>
<dbReference type="InterPro" id="IPR037103">
    <property type="entry name" value="Tubulin/FtsZ-like_C"/>
</dbReference>
<dbReference type="InterPro" id="IPR018316">
    <property type="entry name" value="Tubulin/FtsZ_2-layer-sand-dom"/>
</dbReference>
<dbReference type="InterPro" id="IPR036525">
    <property type="entry name" value="Tubulin/FtsZ_GTPase_sf"/>
</dbReference>
<dbReference type="InterPro" id="IPR023123">
    <property type="entry name" value="Tubulin_C"/>
</dbReference>
<dbReference type="InterPro" id="IPR017975">
    <property type="entry name" value="Tubulin_CS"/>
</dbReference>
<dbReference type="InterPro" id="IPR003008">
    <property type="entry name" value="Tubulin_FtsZ_GTPase"/>
</dbReference>
<dbReference type="PANTHER" id="PTHR11588">
    <property type="entry name" value="TUBULIN"/>
    <property type="match status" value="1"/>
</dbReference>
<dbReference type="Pfam" id="PF00091">
    <property type="entry name" value="Tubulin"/>
    <property type="match status" value="1"/>
</dbReference>
<dbReference type="Pfam" id="PF03953">
    <property type="entry name" value="Tubulin_C"/>
    <property type="match status" value="1"/>
</dbReference>
<dbReference type="PRINTS" id="PR01163">
    <property type="entry name" value="BETATUBULIN"/>
</dbReference>
<dbReference type="PRINTS" id="PR01161">
    <property type="entry name" value="TUBULIN"/>
</dbReference>
<dbReference type="SMART" id="SM00864">
    <property type="entry name" value="Tubulin"/>
    <property type="match status" value="1"/>
</dbReference>
<dbReference type="SMART" id="SM00865">
    <property type="entry name" value="Tubulin_C"/>
    <property type="match status" value="1"/>
</dbReference>
<dbReference type="SUPFAM" id="SSF55307">
    <property type="entry name" value="Tubulin C-terminal domain-like"/>
    <property type="match status" value="1"/>
</dbReference>
<dbReference type="SUPFAM" id="SSF52490">
    <property type="entry name" value="Tubulin nucleotide-binding domain-like"/>
    <property type="match status" value="1"/>
</dbReference>
<dbReference type="PROSITE" id="PS00227">
    <property type="entry name" value="TUBULIN"/>
    <property type="match status" value="1"/>
</dbReference>
<dbReference type="PROSITE" id="PS00228">
    <property type="entry name" value="TUBULIN_B_AUTOREG"/>
    <property type="match status" value="1"/>
</dbReference>
<organism>
    <name type="scientific">Bos taurus</name>
    <name type="common">Bovine</name>
    <dbReference type="NCBI Taxonomy" id="9913"/>
    <lineage>
        <taxon>Eukaryota</taxon>
        <taxon>Metazoa</taxon>
        <taxon>Chordata</taxon>
        <taxon>Craniata</taxon>
        <taxon>Vertebrata</taxon>
        <taxon>Euteleostomi</taxon>
        <taxon>Mammalia</taxon>
        <taxon>Eutheria</taxon>
        <taxon>Laurasiatheria</taxon>
        <taxon>Artiodactyla</taxon>
        <taxon>Ruminantia</taxon>
        <taxon>Pecora</taxon>
        <taxon>Bovidae</taxon>
        <taxon>Bovinae</taxon>
        <taxon>Bos</taxon>
    </lineage>
</organism>
<proteinExistence type="evidence at protein level"/>
<protein>
    <recommendedName>
        <fullName>Tubulin beta-2B chain</fullName>
    </recommendedName>
</protein>
<sequence length="445" mass="49953">MREIVHIQAGQCGNQIGAKFWEVISDEHGIDPTGSYHGDSDLQLERINVYYNEATGNKYVPRAILVDLEPGTMDSVRSGPFGQIFRPDNFVFGQSGAGNNWAKGHYTEGAELVDSVLDVVRKESESCDCLQGFQLTHSLGGGTGSGMGTLLISKIREEYPDRIMNTFSVMPSPKVSDTVVEPYNATLSVHQLVENTDETYCIDNEALYDICFRTLKLTTPTYGDLNHLVSATMSGVTTCLRFPGQLNADLRKLAVNMVPFPRLHFFMPGFAPLTSRGSQQYRALTVPELTQQMFDSKNMMAACDPRHGRYLTVAAIFRGRMSMKEVDEQMLNVQNKNSSYFVEWIPNNVKTAVCDIPPRGLKMSATFIGNSTAIQELFKRISEQFTAMFRRKAFLHWYTGEGMDEMEFTEAESNMNDLVSEYQQYQDATADEQGEFEEEEGEDEA</sequence>
<evidence type="ECO:0000250" key="1">
    <source>
        <dbReference type="UniProtKB" id="A2AQ07"/>
    </source>
</evidence>
<evidence type="ECO:0000250" key="2">
    <source>
        <dbReference type="UniProtKB" id="P07437"/>
    </source>
</evidence>
<evidence type="ECO:0000250" key="3">
    <source>
        <dbReference type="UniProtKB" id="P68363"/>
    </source>
</evidence>
<evidence type="ECO:0000250" key="4">
    <source>
        <dbReference type="UniProtKB" id="P99024"/>
    </source>
</evidence>
<evidence type="ECO:0000250" key="5">
    <source>
        <dbReference type="UniProtKB" id="Q13509"/>
    </source>
</evidence>
<evidence type="ECO:0000250" key="6">
    <source>
        <dbReference type="UniProtKB" id="Q2T9S0"/>
    </source>
</evidence>
<evidence type="ECO:0000250" key="7">
    <source>
        <dbReference type="UniProtKB" id="Q3KRE8"/>
    </source>
</evidence>
<evidence type="ECO:0000250" key="8">
    <source>
        <dbReference type="UniProtKB" id="Q71U36"/>
    </source>
</evidence>
<evidence type="ECO:0000250" key="9">
    <source>
        <dbReference type="UniProtKB" id="Q9BVA1"/>
    </source>
</evidence>
<evidence type="ECO:0000256" key="10">
    <source>
        <dbReference type="SAM" id="MobiDB-lite"/>
    </source>
</evidence>
<evidence type="ECO:0000269" key="11">
    <source>
    </source>
</evidence>
<evidence type="ECO:0000269" key="12">
    <source>
    </source>
</evidence>
<evidence type="ECO:0000269" key="13">
    <source>
    </source>
</evidence>
<evidence type="ECO:0000305" key="14"/>
<evidence type="ECO:0007829" key="15">
    <source>
        <dbReference type="PDB" id="1TVK"/>
    </source>
</evidence>
<evidence type="ECO:0007829" key="16">
    <source>
        <dbReference type="PDB" id="4I4T"/>
    </source>
</evidence>
<evidence type="ECO:0007829" key="17">
    <source>
        <dbReference type="PDB" id="4IIJ"/>
    </source>
</evidence>
<evidence type="ECO:0007829" key="18">
    <source>
        <dbReference type="PDB" id="5IYZ"/>
    </source>
</evidence>
<evidence type="ECO:0007829" key="19">
    <source>
        <dbReference type="PDB" id="5LOV"/>
    </source>
</evidence>
<evidence type="ECO:0007829" key="20">
    <source>
        <dbReference type="PDB" id="5S4S"/>
    </source>
</evidence>
<evidence type="ECO:0007829" key="21">
    <source>
        <dbReference type="PDB" id="5S5Q"/>
    </source>
</evidence>
<evidence type="ECO:0007829" key="22">
    <source>
        <dbReference type="PDB" id="6GF3"/>
    </source>
</evidence>
<evidence type="ECO:0007829" key="23">
    <source>
        <dbReference type="PDB" id="6S8K"/>
    </source>
</evidence>
<evidence type="ECO:0007829" key="24">
    <source>
        <dbReference type="PDB" id="6ZWB"/>
    </source>
</evidence>
<evidence type="ECO:0007829" key="25">
    <source>
        <dbReference type="PDB" id="7Z01"/>
    </source>
</evidence>
<comment type="function">
    <text evidence="9 11 12 13">Tubulin is the major constituent of microtubules, a cylinder consisting of laterally associated linear protofilaments composed of alpha- and beta-tubulin heterodimers (PubMed:2207090, PubMed:6504138, PubMed:7704569). Microtubules grow by the addition of GTP-tubulin dimers to the microtubule end, where a stabilizing cap forms. Below the cap, tubulin dimers are in GDP-bound state, owing to GTPase activity of alpha-tubulin (PubMed:2207090, PubMed:6504138, PubMed:7704569). Implicated in neuronal migration (By similarity).</text>
</comment>
<comment type="cofactor">
    <cofactor evidence="3">
        <name>Mg(2+)</name>
        <dbReference type="ChEBI" id="CHEBI:18420"/>
    </cofactor>
</comment>
<comment type="subunit">
    <text evidence="11 12 13">Dimer of alpha and beta chains (PubMed:2207090, PubMed:6504138, PubMed:7704569). A typical microtubule is a hollow water-filled tube with an outer diameter of 25 nm and an inner diameter of 15 nM. Alpha-beta heterodimers associate head-to-tail to form protofilaments running lengthwise along the microtubule wall with the beta-tubulin subunit facing the microtubule plus end conferring a structural polarity. Microtubules usually have 13 protofilaments but different protofilament numbers can be found in some organisms and specialized cells.</text>
</comment>
<comment type="subcellular location">
    <subcellularLocation>
        <location evidence="11 12 13">Cytoplasm</location>
        <location evidence="11 12 13">Cytoskeleton</location>
    </subcellularLocation>
</comment>
<comment type="domain">
    <text evidence="2">The MREI motif is common among all beta-tubulin isoforms and may be critical for tubulin autoregulation.</text>
</comment>
<comment type="PTM">
    <text evidence="1">Some glutamate residues at the C-terminus are polyglycylated, resulting in polyglycine chains on the gamma-carboxyl group. Glycylation is mainly limited to tubulin incorporated into axonemes (cilia and flagella) whereas glutamylation is prevalent in neuronal cells, centrioles, axonemes, and the mitotic spindle. Both modifications can coexist on the same protein on adjacent residues, and lowering polyglycylation levels increases polyglutamylation, and reciprocally. The precise function of polyglycylation is still unclear.</text>
</comment>
<comment type="PTM">
    <text evidence="1 8">Some glutamate residues at the C-terminus are polyglutamylated, resulting in polyglutamate chains on the gamma-carboxyl group (By similarity). Polyglutamylation plays a key role in microtubule severing by spastin (SPAST). SPAST preferentially recognizes and acts on microtubules decorated with short polyglutamate tails: severing activity by SPAST increases as the number of glutamates per tubulin rises from one to eight, but decreases beyond this glutamylation threshold (By similarity).</text>
</comment>
<comment type="PTM">
    <text evidence="9">Phosphorylated on Ser-172 by CDK1 during the cell cycle, from metaphase to telophase, but not in interphase. This phosphorylation inhibits tubulin incorporation into microtubules.</text>
</comment>
<comment type="similarity">
    <text evidence="14">Belongs to the tubulin family.</text>
</comment>
<keyword id="KW-0002">3D-structure</keyword>
<keyword id="KW-0007">Acetylation</keyword>
<keyword id="KW-0963">Cytoplasm</keyword>
<keyword id="KW-0206">Cytoskeleton</keyword>
<keyword id="KW-0342">GTP-binding</keyword>
<keyword id="KW-1017">Isopeptide bond</keyword>
<keyword id="KW-0460">Magnesium</keyword>
<keyword id="KW-0479">Metal-binding</keyword>
<keyword id="KW-0488">Methylation</keyword>
<keyword id="KW-0493">Microtubule</keyword>
<keyword id="KW-0524">Neurogenesis</keyword>
<keyword id="KW-0547">Nucleotide-binding</keyword>
<keyword id="KW-0597">Phosphoprotein</keyword>
<keyword id="KW-1185">Reference proteome</keyword>
<keyword id="KW-0832">Ubl conjugation</keyword>
<feature type="chain" id="PRO_0000262654" description="Tubulin beta-2B chain">
    <location>
        <begin position="1"/>
        <end position="445"/>
    </location>
</feature>
<feature type="region of interest" description="Disordered" evidence="10">
    <location>
        <begin position="422"/>
        <end position="445"/>
    </location>
</feature>
<feature type="short sequence motif" description="MREI motif" evidence="2">
    <location>
        <begin position="1"/>
        <end position="4"/>
    </location>
</feature>
<feature type="compositionally biased region" description="Acidic residues" evidence="10">
    <location>
        <begin position="429"/>
        <end position="445"/>
    </location>
</feature>
<feature type="binding site" evidence="5">
    <location>
        <position position="11"/>
    </location>
    <ligand>
        <name>GTP</name>
        <dbReference type="ChEBI" id="CHEBI:37565"/>
    </ligand>
</feature>
<feature type="binding site" evidence="3">
    <location>
        <position position="69"/>
    </location>
    <ligand>
        <name>GTP</name>
        <dbReference type="ChEBI" id="CHEBI:37565"/>
    </ligand>
</feature>
<feature type="binding site" evidence="3">
    <location>
        <position position="69"/>
    </location>
    <ligand>
        <name>Mg(2+)</name>
        <dbReference type="ChEBI" id="CHEBI:18420"/>
    </ligand>
</feature>
<feature type="binding site" evidence="5">
    <location>
        <position position="138"/>
    </location>
    <ligand>
        <name>GTP</name>
        <dbReference type="ChEBI" id="CHEBI:37565"/>
    </ligand>
</feature>
<feature type="binding site" evidence="5">
    <location>
        <position position="142"/>
    </location>
    <ligand>
        <name>GTP</name>
        <dbReference type="ChEBI" id="CHEBI:37565"/>
    </ligand>
</feature>
<feature type="binding site" evidence="5">
    <location>
        <position position="143"/>
    </location>
    <ligand>
        <name>GTP</name>
        <dbReference type="ChEBI" id="CHEBI:37565"/>
    </ligand>
</feature>
<feature type="binding site" evidence="5">
    <location>
        <position position="144"/>
    </location>
    <ligand>
        <name>GTP</name>
        <dbReference type="ChEBI" id="CHEBI:37565"/>
    </ligand>
</feature>
<feature type="binding site" evidence="5">
    <location>
        <position position="204"/>
    </location>
    <ligand>
        <name>GTP</name>
        <dbReference type="ChEBI" id="CHEBI:37565"/>
    </ligand>
</feature>
<feature type="binding site" evidence="5">
    <location>
        <position position="226"/>
    </location>
    <ligand>
        <name>GTP</name>
        <dbReference type="ChEBI" id="CHEBI:37565"/>
    </ligand>
</feature>
<feature type="modified residue" description="Phosphoserine" evidence="4">
    <location>
        <position position="40"/>
    </location>
</feature>
<feature type="modified residue" description="Phosphothreonine" evidence="7">
    <location>
        <position position="55"/>
    </location>
</feature>
<feature type="modified residue" description="N6-acetyllysine; alternate" evidence="2">
    <location>
        <position position="58"/>
    </location>
</feature>
<feature type="modified residue" description="N6-succinyllysine; alternate" evidence="4">
    <location>
        <position position="58"/>
    </location>
</feature>
<feature type="modified residue" description="Phosphoserine; by CDK1" evidence="9">
    <location>
        <position position="172"/>
    </location>
</feature>
<feature type="modified residue" description="Phosphothreonine" evidence="2">
    <location>
        <position position="285"/>
    </location>
</feature>
<feature type="modified residue" description="Phosphothreonine" evidence="2">
    <location>
        <position position="290"/>
    </location>
</feature>
<feature type="modified residue" description="Omega-N-methylarginine" evidence="2">
    <location>
        <position position="318"/>
    </location>
</feature>
<feature type="modified residue" description="5-glutamyl polyglutamate" evidence="6">
    <location>
        <position position="438"/>
    </location>
</feature>
<feature type="cross-link" description="Glycyl lysine isopeptide (Lys-Gly) (interchain with G-Cter in ubiquitin); alternate" evidence="2">
    <location>
        <position position="58"/>
    </location>
</feature>
<feature type="cross-link" description="Glycyl lysine isopeptide (Lys-Gly) (interchain with G-Cter in ubiquitin)" evidence="2">
    <location>
        <position position="324"/>
    </location>
</feature>
<feature type="sequence conflict" description="In Ref. 1; AAT84374." evidence="14" ref="1">
    <original>C</original>
    <variation>S</variation>
    <location>
        <position position="201"/>
    </location>
</feature>
<feature type="strand" evidence="23">
    <location>
        <begin position="4"/>
        <end position="9"/>
    </location>
</feature>
<feature type="helix" evidence="23">
    <location>
        <begin position="10"/>
        <end position="28"/>
    </location>
</feature>
<feature type="strand" evidence="23">
    <location>
        <begin position="34"/>
        <end position="36"/>
    </location>
</feature>
<feature type="strand" evidence="17">
    <location>
        <begin position="39"/>
        <end position="41"/>
    </location>
</feature>
<feature type="helix" evidence="23">
    <location>
        <begin position="42"/>
        <end position="45"/>
    </location>
</feature>
<feature type="helix" evidence="23">
    <location>
        <begin position="47"/>
        <end position="49"/>
    </location>
</feature>
<feature type="strand" evidence="23">
    <location>
        <begin position="51"/>
        <end position="53"/>
    </location>
</feature>
<feature type="strand" evidence="23">
    <location>
        <begin position="57"/>
        <end position="61"/>
    </location>
</feature>
<feature type="strand" evidence="23">
    <location>
        <begin position="63"/>
        <end position="69"/>
    </location>
</feature>
<feature type="helix" evidence="23">
    <location>
        <begin position="70"/>
        <end position="78"/>
    </location>
</feature>
<feature type="strand" evidence="21">
    <location>
        <begin position="79"/>
        <end position="81"/>
    </location>
</feature>
<feature type="helix" evidence="23">
    <location>
        <begin position="82"/>
        <end position="84"/>
    </location>
</feature>
<feature type="helix" evidence="23">
    <location>
        <begin position="87"/>
        <end position="89"/>
    </location>
</feature>
<feature type="strand" evidence="23">
    <location>
        <begin position="90"/>
        <end position="92"/>
    </location>
</feature>
<feature type="helix" evidence="23">
    <location>
        <begin position="101"/>
        <end position="106"/>
    </location>
</feature>
<feature type="helix" evidence="23">
    <location>
        <begin position="108"/>
        <end position="125"/>
    </location>
</feature>
<feature type="strand" evidence="15">
    <location>
        <begin position="126"/>
        <end position="128"/>
    </location>
</feature>
<feature type="strand" evidence="23">
    <location>
        <begin position="132"/>
        <end position="142"/>
    </location>
</feature>
<feature type="helix" evidence="23">
    <location>
        <begin position="143"/>
        <end position="158"/>
    </location>
</feature>
<feature type="strand" evidence="23">
    <location>
        <begin position="162"/>
        <end position="170"/>
    </location>
</feature>
<feature type="turn" evidence="18">
    <location>
        <begin position="173"/>
        <end position="175"/>
    </location>
</feature>
<feature type="strand" evidence="22">
    <location>
        <begin position="177"/>
        <end position="179"/>
    </location>
</feature>
<feature type="helix" evidence="23">
    <location>
        <begin position="181"/>
        <end position="195"/>
    </location>
</feature>
<feature type="strand" evidence="23">
    <location>
        <begin position="197"/>
        <end position="203"/>
    </location>
</feature>
<feature type="helix" evidence="23">
    <location>
        <begin position="204"/>
        <end position="213"/>
    </location>
</feature>
<feature type="helix" evidence="23">
    <location>
        <begin position="222"/>
        <end position="241"/>
    </location>
</feature>
<feature type="turn" evidence="24">
    <location>
        <begin position="244"/>
        <end position="246"/>
    </location>
</feature>
<feature type="helix" evidence="23">
    <location>
        <begin position="250"/>
        <end position="257"/>
    </location>
</feature>
<feature type="strand" evidence="20">
    <location>
        <begin position="259"/>
        <end position="262"/>
    </location>
</feature>
<feature type="strand" evidence="23">
    <location>
        <begin position="265"/>
        <end position="272"/>
    </location>
</feature>
<feature type="helix" evidence="16">
    <location>
        <begin position="278"/>
        <end position="280"/>
    </location>
</feature>
<feature type="helix" evidence="23">
    <location>
        <begin position="286"/>
        <end position="294"/>
    </location>
</feature>
<feature type="helix" evidence="23">
    <location>
        <begin position="296"/>
        <end position="298"/>
    </location>
</feature>
<feature type="strand" evidence="23">
    <location>
        <begin position="299"/>
        <end position="302"/>
    </location>
</feature>
<feature type="helix" evidence="23">
    <location>
        <begin position="305"/>
        <end position="307"/>
    </location>
</feature>
<feature type="strand" evidence="23">
    <location>
        <begin position="310"/>
        <end position="320"/>
    </location>
</feature>
<feature type="helix" evidence="23">
    <location>
        <begin position="323"/>
        <end position="336"/>
    </location>
</feature>
<feature type="helix" evidence="23">
    <location>
        <begin position="338"/>
        <end position="340"/>
    </location>
</feature>
<feature type="strand" evidence="25">
    <location>
        <begin position="345"/>
        <end position="347"/>
    </location>
</feature>
<feature type="strand" evidence="23">
    <location>
        <begin position="349"/>
        <end position="356"/>
    </location>
</feature>
<feature type="turn" evidence="19">
    <location>
        <begin position="359"/>
        <end position="361"/>
    </location>
</feature>
<feature type="strand" evidence="23">
    <location>
        <begin position="362"/>
        <end position="371"/>
    </location>
</feature>
<feature type="helix" evidence="23">
    <location>
        <begin position="372"/>
        <end position="374"/>
    </location>
</feature>
<feature type="helix" evidence="23">
    <location>
        <begin position="375"/>
        <end position="390"/>
    </location>
</feature>
<feature type="turn" evidence="23">
    <location>
        <begin position="391"/>
        <end position="395"/>
    </location>
</feature>
<feature type="helix" evidence="23">
    <location>
        <begin position="396"/>
        <end position="399"/>
    </location>
</feature>
<feature type="turn" evidence="23">
    <location>
        <begin position="400"/>
        <end position="402"/>
    </location>
</feature>
<feature type="helix" evidence="23">
    <location>
        <begin position="405"/>
        <end position="426"/>
    </location>
</feature>
<gene>
    <name type="primary">TUBB2B</name>
</gene>
<accession>Q6B856</accession>
<name>TBB2B_BOVIN</name>
<reference key="1">
    <citation type="submission" date="2004-07" db="EMBL/GenBank/DDBJ databases">
        <title>Differentially expressed genes in bovine 8-cell embryo.</title>
        <authorList>
            <person name="Hwang K.C."/>
            <person name="Park S.Y."/>
            <person name="Cui X.S."/>
            <person name="Kim N.H."/>
        </authorList>
    </citation>
    <scope>NUCLEOTIDE SEQUENCE [MRNA]</scope>
</reference>
<reference key="2">
    <citation type="journal article" date="2009" name="Science">
        <title>The genome sequence of taurine cattle: a window to ruminant biology and evolution.</title>
        <authorList>
            <consortium name="The bovine genome sequencing and analysis consortium"/>
        </authorList>
    </citation>
    <scope>NUCLEOTIDE SEQUENCE [LARGE SCALE GENOMIC DNA]</scope>
    <source>
        <strain>Hereford</strain>
    </source>
</reference>
<reference key="3">
    <citation type="journal article" date="1984" name="Nature">
        <title>Dynamic instability of microtubule growth.</title>
        <authorList>
            <person name="Mitchison T."/>
            <person name="Kirschner M."/>
        </authorList>
    </citation>
    <scope>FUNCTION</scope>
    <scope>SUBUNIT</scope>
    <scope>SUBCELLULAR LOCATION</scope>
</reference>
<reference key="4">
    <citation type="journal article" date="1990" name="Biochemistry">
        <title>Role of GTP hydrolysis in microtubule polymerization: evidence for a coupled hydrolysis mechanism.</title>
        <authorList>
            <person name="Stewart R.J."/>
            <person name="Farrell K.W."/>
            <person name="Wilson L."/>
        </authorList>
    </citation>
    <scope>FUNCTION</scope>
    <scope>SUBUNIT</scope>
    <scope>SUBCELLULAR LOCATION</scope>
</reference>
<reference key="5">
    <citation type="journal article" date="1994" name="Curr. Biol.">
        <title>The minimum GTP cap required to stabilize microtubules.</title>
        <authorList>
            <person name="Drechsel D.N."/>
            <person name="Kirschner M.W."/>
        </authorList>
    </citation>
    <scope>FUNCTION</scope>
    <scope>SUBUNIT</scope>
    <scope>SUBCELLULAR LOCATION</scope>
</reference>